<proteinExistence type="evidence at protein level"/>
<keyword id="KW-0002">3D-structure</keyword>
<keyword id="KW-0007">Acetylation</keyword>
<keyword id="KW-0963">Cytoplasm</keyword>
<keyword id="KW-0903">Direct protein sequencing</keyword>
<keyword id="KW-0945">Host-virus interaction</keyword>
<keyword id="KW-0509">mRNA transport</keyword>
<keyword id="KW-0539">Nucleus</keyword>
<keyword id="KW-0597">Phosphoprotein</keyword>
<keyword id="KW-0653">Protein transport</keyword>
<keyword id="KW-1267">Proteomics identification</keyword>
<keyword id="KW-1185">Reference proteome</keyword>
<keyword id="KW-0677">Repeat</keyword>
<keyword id="KW-0694">RNA-binding</keyword>
<keyword id="KW-0813">Transport</keyword>
<protein>
    <recommendedName>
        <fullName>Exportin-1</fullName>
        <shortName>Exp1</shortName>
    </recommendedName>
    <alternativeName>
        <fullName>Chromosome region maintenance 1 protein homolog</fullName>
    </alternativeName>
</protein>
<gene>
    <name type="primary">XPO1</name>
    <name type="synonym">CRM1</name>
</gene>
<accession>O14980</accession>
<accession>A6NL14</accession>
<accession>A8K1K5</accession>
<accession>D6W5E2</accession>
<accession>Q63HP8</accession>
<accession>Q68CP3</accession>
<accession>Q99433</accession>
<dbReference type="EMBL" id="Y08614">
    <property type="protein sequence ID" value="CAA69905.2"/>
    <property type="molecule type" value="mRNA"/>
</dbReference>
<dbReference type="EMBL" id="D89729">
    <property type="protein sequence ID" value="BAA23415.1"/>
    <property type="molecule type" value="mRNA"/>
</dbReference>
<dbReference type="EMBL" id="AK289920">
    <property type="protein sequence ID" value="BAF82609.1"/>
    <property type="molecule type" value="mRNA"/>
</dbReference>
<dbReference type="EMBL" id="BX647758">
    <property type="protein sequence ID" value="CAH56174.1"/>
    <property type="molecule type" value="mRNA"/>
</dbReference>
<dbReference type="EMBL" id="CR749840">
    <property type="protein sequence ID" value="CAH18695.1"/>
    <property type="molecule type" value="mRNA"/>
</dbReference>
<dbReference type="EMBL" id="AC016727">
    <property type="protein sequence ID" value="AAY14949.1"/>
    <property type="molecule type" value="Genomic_DNA"/>
</dbReference>
<dbReference type="EMBL" id="CH471053">
    <property type="protein sequence ID" value="EAW99993.1"/>
    <property type="molecule type" value="Genomic_DNA"/>
</dbReference>
<dbReference type="EMBL" id="CH471053">
    <property type="protein sequence ID" value="EAW99994.1"/>
    <property type="molecule type" value="Genomic_DNA"/>
</dbReference>
<dbReference type="EMBL" id="BC032847">
    <property type="protein sequence ID" value="AAH32847.1"/>
    <property type="molecule type" value="mRNA"/>
</dbReference>
<dbReference type="CCDS" id="CCDS33205.1"/>
<dbReference type="RefSeq" id="NP_003391.1">
    <property type="nucleotide sequence ID" value="NM_003400.4"/>
</dbReference>
<dbReference type="RefSeq" id="XP_006712157.1">
    <property type="nucleotide sequence ID" value="XM_006712094.4"/>
</dbReference>
<dbReference type="RefSeq" id="XP_011531399.1">
    <property type="nucleotide sequence ID" value="XM_011533097.2"/>
</dbReference>
<dbReference type="RefSeq" id="XP_024308893.1">
    <property type="nucleotide sequence ID" value="XM_024453125.2"/>
</dbReference>
<dbReference type="RefSeq" id="XP_047301714.1">
    <property type="nucleotide sequence ID" value="XM_047445758.1"/>
</dbReference>
<dbReference type="RefSeq" id="XP_047301715.1">
    <property type="nucleotide sequence ID" value="XM_047445759.1"/>
</dbReference>
<dbReference type="RefSeq" id="XP_047301716.1">
    <property type="nucleotide sequence ID" value="XM_047445760.1"/>
</dbReference>
<dbReference type="RefSeq" id="XP_054199748.1">
    <property type="nucleotide sequence ID" value="XM_054343773.1"/>
</dbReference>
<dbReference type="RefSeq" id="XP_054199749.1">
    <property type="nucleotide sequence ID" value="XM_054343774.1"/>
</dbReference>
<dbReference type="RefSeq" id="XP_054199750.1">
    <property type="nucleotide sequence ID" value="XM_054343775.1"/>
</dbReference>
<dbReference type="RefSeq" id="XP_054199751.1">
    <property type="nucleotide sequence ID" value="XM_054343776.1"/>
</dbReference>
<dbReference type="RefSeq" id="XP_054199752.1">
    <property type="nucleotide sequence ID" value="XM_054343777.1"/>
</dbReference>
<dbReference type="RefSeq" id="XP_054199753.1">
    <property type="nucleotide sequence ID" value="XM_054343778.1"/>
</dbReference>
<dbReference type="PDB" id="1W9C">
    <property type="method" value="X-ray"/>
    <property type="resolution" value="2.30 A"/>
    <property type="chains" value="A/B=707-1027"/>
</dbReference>
<dbReference type="PDB" id="2L1L">
    <property type="method" value="NMR"/>
    <property type="chains" value="B=504-630"/>
</dbReference>
<dbReference type="PDB" id="3GB8">
    <property type="method" value="X-ray"/>
    <property type="resolution" value="2.90 A"/>
    <property type="chains" value="A=1-1071"/>
</dbReference>
<dbReference type="PDB" id="4BSM">
    <property type="method" value="X-ray"/>
    <property type="resolution" value="4.50 A"/>
    <property type="chains" value="A=1-1032"/>
</dbReference>
<dbReference type="PDB" id="4BSN">
    <property type="method" value="X-ray"/>
    <property type="resolution" value="4.10 A"/>
    <property type="chains" value="A=1-1032"/>
</dbReference>
<dbReference type="PDB" id="5DIS">
    <property type="method" value="X-ray"/>
    <property type="resolution" value="2.85 A"/>
    <property type="chains" value="A=5-1048"/>
</dbReference>
<dbReference type="PDB" id="6TVO">
    <property type="method" value="X-ray"/>
    <property type="resolution" value="3.20 A"/>
    <property type="chains" value="A=1-1036"/>
</dbReference>
<dbReference type="PDB" id="7B51">
    <property type="method" value="X-ray"/>
    <property type="resolution" value="2.58 A"/>
    <property type="chains" value="A=1-1036"/>
</dbReference>
<dbReference type="PDB" id="9B62">
    <property type="method" value="EM"/>
    <property type="resolution" value="2.90 A"/>
    <property type="chains" value="A=1-1071"/>
</dbReference>
<dbReference type="PDBsum" id="1W9C"/>
<dbReference type="PDBsum" id="2L1L"/>
<dbReference type="PDBsum" id="3GB8"/>
<dbReference type="PDBsum" id="4BSM"/>
<dbReference type="PDBsum" id="4BSN"/>
<dbReference type="PDBsum" id="5DIS"/>
<dbReference type="PDBsum" id="6TVO"/>
<dbReference type="PDBsum" id="7B51"/>
<dbReference type="PDBsum" id="9B62"/>
<dbReference type="EMDB" id="EMD-44235"/>
<dbReference type="EMDB" id="EMD-44236"/>
<dbReference type="EMDB" id="EMD-44237"/>
<dbReference type="EMDB" id="EMD-44238"/>
<dbReference type="EMDB" id="EMD-44239"/>
<dbReference type="EMDB" id="EMD-44240"/>
<dbReference type="EMDB" id="EMD-44241"/>
<dbReference type="EMDB" id="EMD-44242"/>
<dbReference type="EMDB" id="EMD-44243"/>
<dbReference type="EMDB" id="EMD-6231"/>
<dbReference type="SMR" id="O14980"/>
<dbReference type="BioGRID" id="113348">
    <property type="interactions" value="1558"/>
</dbReference>
<dbReference type="CORUM" id="O14980"/>
<dbReference type="DIP" id="DIP-33678N"/>
<dbReference type="FunCoup" id="O14980">
    <property type="interactions" value="5071"/>
</dbReference>
<dbReference type="IntAct" id="O14980">
    <property type="interactions" value="206"/>
</dbReference>
<dbReference type="MINT" id="O14980"/>
<dbReference type="STRING" id="9606.ENSP00000384863"/>
<dbReference type="BindingDB" id="O14980"/>
<dbReference type="ChEMBL" id="CHEMBL5661"/>
<dbReference type="DrugBank" id="DB16153">
    <property type="generic name" value="Eltanexor"/>
</dbReference>
<dbReference type="DrugBank" id="DB11942">
    <property type="generic name" value="Selinexor"/>
</dbReference>
<dbReference type="DrugCentral" id="O14980"/>
<dbReference type="TCDB" id="1.I.1.1.3">
    <property type="family name" value="the nuclear pore complex (npc) family"/>
</dbReference>
<dbReference type="GlyGen" id="O14980">
    <property type="glycosylation" value="1 site, 1 O-linked glycan (1 site)"/>
</dbReference>
<dbReference type="iPTMnet" id="O14980"/>
<dbReference type="MetOSite" id="O14980"/>
<dbReference type="PhosphoSitePlus" id="O14980"/>
<dbReference type="SwissPalm" id="O14980"/>
<dbReference type="BioMuta" id="XPO1"/>
<dbReference type="jPOST" id="O14980"/>
<dbReference type="MassIVE" id="O14980"/>
<dbReference type="PaxDb" id="9606-ENSP00000384863"/>
<dbReference type="PeptideAtlas" id="O14980"/>
<dbReference type="ProteomicsDB" id="48356"/>
<dbReference type="Pumba" id="O14980"/>
<dbReference type="Antibodypedia" id="4124">
    <property type="antibodies" value="354 antibodies from 35 providers"/>
</dbReference>
<dbReference type="DNASU" id="7514"/>
<dbReference type="Ensembl" id="ENST00000401558.7">
    <property type="protein sequence ID" value="ENSP00000384863.2"/>
    <property type="gene ID" value="ENSG00000082898.19"/>
</dbReference>
<dbReference type="Ensembl" id="ENST00000404992.6">
    <property type="protein sequence ID" value="ENSP00000385942.2"/>
    <property type="gene ID" value="ENSG00000082898.19"/>
</dbReference>
<dbReference type="Ensembl" id="ENST00000406957.5">
    <property type="protein sequence ID" value="ENSP00000385559.1"/>
    <property type="gene ID" value="ENSG00000082898.19"/>
</dbReference>
<dbReference type="Ensembl" id="ENST00000676553.1">
    <property type="protein sequence ID" value="ENSP00000504247.1"/>
    <property type="gene ID" value="ENSG00000082898.19"/>
</dbReference>
<dbReference type="Ensembl" id="ENST00000676667.1">
    <property type="protein sequence ID" value="ENSP00000503809.1"/>
    <property type="gene ID" value="ENSG00000082898.19"/>
</dbReference>
<dbReference type="Ensembl" id="ENST00000677150.1">
    <property type="protein sequence ID" value="ENSP00000503167.1"/>
    <property type="gene ID" value="ENSG00000082898.19"/>
</dbReference>
<dbReference type="Ensembl" id="ENST00000677239.1">
    <property type="protein sequence ID" value="ENSP00000504087.1"/>
    <property type="gene ID" value="ENSG00000082898.19"/>
</dbReference>
<dbReference type="Ensembl" id="ENST00000677417.1">
    <property type="protein sequence ID" value="ENSP00000503572.1"/>
    <property type="gene ID" value="ENSG00000082898.19"/>
</dbReference>
<dbReference type="Ensembl" id="ENST00000677813.1">
    <property type="protein sequence ID" value="ENSP00000504543.1"/>
    <property type="gene ID" value="ENSG00000082898.19"/>
</dbReference>
<dbReference type="Ensembl" id="ENST00000677814.1">
    <property type="protein sequence ID" value="ENSP00000504848.1"/>
    <property type="gene ID" value="ENSG00000082898.19"/>
</dbReference>
<dbReference type="Ensembl" id="ENST00000677928.1">
    <property type="protein sequence ID" value="ENSP00000504198.1"/>
    <property type="gene ID" value="ENSG00000082898.19"/>
</dbReference>
<dbReference type="Ensembl" id="ENST00000677933.1">
    <property type="protein sequence ID" value="ENSP00000503482.1"/>
    <property type="gene ID" value="ENSG00000082898.19"/>
</dbReference>
<dbReference type="Ensembl" id="ENST00000678182.1">
    <property type="protein sequence ID" value="ENSP00000504594.1"/>
    <property type="gene ID" value="ENSG00000082898.19"/>
</dbReference>
<dbReference type="Ensembl" id="ENST00000678790.1">
    <property type="protein sequence ID" value="ENSP00000503419.1"/>
    <property type="gene ID" value="ENSG00000082898.19"/>
</dbReference>
<dbReference type="GeneID" id="7514"/>
<dbReference type="KEGG" id="hsa:7514"/>
<dbReference type="MANE-Select" id="ENST00000401558.7">
    <property type="protein sequence ID" value="ENSP00000384863.2"/>
    <property type="RefSeq nucleotide sequence ID" value="NM_003400.4"/>
    <property type="RefSeq protein sequence ID" value="NP_003391.1"/>
</dbReference>
<dbReference type="UCSC" id="uc002sbj.4">
    <property type="organism name" value="human"/>
</dbReference>
<dbReference type="AGR" id="HGNC:12825"/>
<dbReference type="CTD" id="7514"/>
<dbReference type="DisGeNET" id="7514"/>
<dbReference type="GeneCards" id="XPO1"/>
<dbReference type="HGNC" id="HGNC:12825">
    <property type="gene designation" value="XPO1"/>
</dbReference>
<dbReference type="HPA" id="ENSG00000082898">
    <property type="expression patterns" value="Low tissue specificity"/>
</dbReference>
<dbReference type="MalaCards" id="XPO1"/>
<dbReference type="MIM" id="602559">
    <property type="type" value="gene"/>
</dbReference>
<dbReference type="neXtProt" id="NX_O14980"/>
<dbReference type="OpenTargets" id="ENSG00000082898"/>
<dbReference type="Orphanet" id="98838">
    <property type="disease" value="Primary mediastinal large B-cell lymphoma"/>
</dbReference>
<dbReference type="PharmGKB" id="PA37418"/>
<dbReference type="VEuPathDB" id="HostDB:ENSG00000082898"/>
<dbReference type="eggNOG" id="KOG2020">
    <property type="taxonomic scope" value="Eukaryota"/>
</dbReference>
<dbReference type="GeneTree" id="ENSGT00940000153408"/>
<dbReference type="HOGENOM" id="CLU_011906_0_0_1"/>
<dbReference type="InParanoid" id="O14980"/>
<dbReference type="OMA" id="WAFKHNN"/>
<dbReference type="OrthoDB" id="27218at2759"/>
<dbReference type="PAN-GO" id="O14980">
    <property type="GO annotations" value="5 GO annotations based on evolutionary models"/>
</dbReference>
<dbReference type="PhylomeDB" id="O14980"/>
<dbReference type="TreeFam" id="TF105695"/>
<dbReference type="PathwayCommons" id="O14980"/>
<dbReference type="Reactome" id="R-HSA-141444">
    <property type="pathway name" value="Amplification of signal from unattached kinetochores via a MAD2 inhibitory signal"/>
</dbReference>
<dbReference type="Reactome" id="R-HSA-165054">
    <property type="pathway name" value="Rev-mediated nuclear export of HIV RNA"/>
</dbReference>
<dbReference type="Reactome" id="R-HSA-168333">
    <property type="pathway name" value="NEP/NS2 Interacts with the Cellular Export Machinery"/>
</dbReference>
<dbReference type="Reactome" id="R-HSA-2173788">
    <property type="pathway name" value="Downregulation of TGF-beta receptor signaling"/>
</dbReference>
<dbReference type="Reactome" id="R-HSA-2467813">
    <property type="pathway name" value="Separation of Sister Chromatids"/>
</dbReference>
<dbReference type="Reactome" id="R-HSA-2500257">
    <property type="pathway name" value="Resolution of Sister Chromatid Cohesion"/>
</dbReference>
<dbReference type="Reactome" id="R-HSA-3769402">
    <property type="pathway name" value="Deactivation of the beta-catenin transactivating complex"/>
</dbReference>
<dbReference type="Reactome" id="R-HSA-450520">
    <property type="pathway name" value="HuR (ELAVL1) binds and stabilizes mRNA"/>
</dbReference>
<dbReference type="Reactome" id="R-HSA-5663220">
    <property type="pathway name" value="RHO GTPases Activate Formins"/>
</dbReference>
<dbReference type="Reactome" id="R-HSA-5687128">
    <property type="pathway name" value="MAPK6/MAPK4 signaling"/>
</dbReference>
<dbReference type="Reactome" id="R-HSA-68877">
    <property type="pathway name" value="Mitotic Prometaphase"/>
</dbReference>
<dbReference type="Reactome" id="R-HSA-69273">
    <property type="pathway name" value="Cyclin A/B1/B2 associated events during G2/M transition"/>
</dbReference>
<dbReference type="Reactome" id="R-HSA-9634638">
    <property type="pathway name" value="Estrogen-dependent nuclear events downstream of ESR-membrane signaling"/>
</dbReference>
<dbReference type="Reactome" id="R-HSA-9648025">
    <property type="pathway name" value="EML4 and NUDC in mitotic spindle formation"/>
</dbReference>
<dbReference type="Reactome" id="R-HSA-9707616">
    <property type="pathway name" value="Heme signaling"/>
</dbReference>
<dbReference type="Reactome" id="R-HSA-9768919">
    <property type="pathway name" value="NPAS4 regulates expression of target genes"/>
</dbReference>
<dbReference type="Reactome" id="R-HSA-9828806">
    <property type="pathway name" value="Maturation of hRSV A proteins"/>
</dbReference>
<dbReference type="Reactome" id="R-HSA-9856649">
    <property type="pathway name" value="Transcriptional and post-translational regulation of MITF-M expression and activity"/>
</dbReference>
<dbReference type="SignaLink" id="O14980"/>
<dbReference type="SIGNOR" id="O14980"/>
<dbReference type="BioGRID-ORCS" id="7514">
    <property type="hits" value="740 hits in 1180 CRISPR screens"/>
</dbReference>
<dbReference type="CD-CODE" id="6F24707C">
    <property type="entry name" value="Cajal body"/>
</dbReference>
<dbReference type="CD-CODE" id="804901D1">
    <property type="entry name" value="Nuclear speckle"/>
</dbReference>
<dbReference type="CD-CODE" id="8C2F96ED">
    <property type="entry name" value="Centrosome"/>
</dbReference>
<dbReference type="CD-CODE" id="91857CE7">
    <property type="entry name" value="Nucleolus"/>
</dbReference>
<dbReference type="CD-CODE" id="B5B9A610">
    <property type="entry name" value="PML body"/>
</dbReference>
<dbReference type="CD-CODE" id="BC3C46DC">
    <property type="entry name" value="Synthetic Condensate 000257"/>
</dbReference>
<dbReference type="CD-CODE" id="FB4E32DD">
    <property type="entry name" value="Presynaptic clusters and postsynaptic densities"/>
</dbReference>
<dbReference type="ChiTaRS" id="XPO1">
    <property type="organism name" value="human"/>
</dbReference>
<dbReference type="EvolutionaryTrace" id="O14980"/>
<dbReference type="GeneWiki" id="XPO1"/>
<dbReference type="GenomeRNAi" id="7514"/>
<dbReference type="Pharos" id="O14980">
    <property type="development level" value="Tclin"/>
</dbReference>
<dbReference type="PRO" id="PR:O14980"/>
<dbReference type="Proteomes" id="UP000005640">
    <property type="component" value="Chromosome 2"/>
</dbReference>
<dbReference type="RNAct" id="O14980">
    <property type="molecule type" value="protein"/>
</dbReference>
<dbReference type="Bgee" id="ENSG00000082898">
    <property type="expression patterns" value="Expressed in tibia and 214 other cell types or tissues"/>
</dbReference>
<dbReference type="ExpressionAtlas" id="O14980">
    <property type="expression patterns" value="baseline and differential"/>
</dbReference>
<dbReference type="GO" id="GO:0005642">
    <property type="term" value="C:annulate lamellae"/>
    <property type="evidence" value="ECO:0000314"/>
    <property type="project" value="UniProtKB"/>
</dbReference>
<dbReference type="GO" id="GO:0015030">
    <property type="term" value="C:Cajal body"/>
    <property type="evidence" value="ECO:0007669"/>
    <property type="project" value="UniProtKB-SubCell"/>
</dbReference>
<dbReference type="GO" id="GO:0005737">
    <property type="term" value="C:cytoplasm"/>
    <property type="evidence" value="ECO:0000314"/>
    <property type="project" value="ParkinsonsUK-UCL"/>
</dbReference>
<dbReference type="GO" id="GO:0005829">
    <property type="term" value="C:cytosol"/>
    <property type="evidence" value="ECO:0000314"/>
    <property type="project" value="HPA"/>
</dbReference>
<dbReference type="GO" id="GO:0043231">
    <property type="term" value="C:intracellular membrane-bounded organelle"/>
    <property type="evidence" value="ECO:0000314"/>
    <property type="project" value="HPA"/>
</dbReference>
<dbReference type="GO" id="GO:0000776">
    <property type="term" value="C:kinetochore"/>
    <property type="evidence" value="ECO:0000314"/>
    <property type="project" value="UniProtKB"/>
</dbReference>
<dbReference type="GO" id="GO:0016020">
    <property type="term" value="C:membrane"/>
    <property type="evidence" value="ECO:0007005"/>
    <property type="project" value="UniProtKB"/>
</dbReference>
<dbReference type="GO" id="GO:0005635">
    <property type="term" value="C:nuclear envelope"/>
    <property type="evidence" value="ECO:0000304"/>
    <property type="project" value="ProtInc"/>
</dbReference>
<dbReference type="GO" id="GO:0031965">
    <property type="term" value="C:nuclear membrane"/>
    <property type="evidence" value="ECO:0000314"/>
    <property type="project" value="HPA"/>
</dbReference>
<dbReference type="GO" id="GO:0005730">
    <property type="term" value="C:nucleolus"/>
    <property type="evidence" value="ECO:0000314"/>
    <property type="project" value="ParkinsonsUK-UCL"/>
</dbReference>
<dbReference type="GO" id="GO:0005654">
    <property type="term" value="C:nucleoplasm"/>
    <property type="evidence" value="ECO:0000314"/>
    <property type="project" value="HPA"/>
</dbReference>
<dbReference type="GO" id="GO:0005634">
    <property type="term" value="C:nucleus"/>
    <property type="evidence" value="ECO:0000318"/>
    <property type="project" value="GO_Central"/>
</dbReference>
<dbReference type="GO" id="GO:0032991">
    <property type="term" value="C:protein-containing complex"/>
    <property type="evidence" value="ECO:0000314"/>
    <property type="project" value="UniProtKB"/>
</dbReference>
<dbReference type="GO" id="GO:1990904">
    <property type="term" value="C:ribonucleoprotein complex"/>
    <property type="evidence" value="ECO:0000314"/>
    <property type="project" value="MGI"/>
</dbReference>
<dbReference type="GO" id="GO:0140297">
    <property type="term" value="F:DNA-binding transcription factor binding"/>
    <property type="evidence" value="ECO:0007669"/>
    <property type="project" value="Ensembl"/>
</dbReference>
<dbReference type="GO" id="GO:0005049">
    <property type="term" value="F:nuclear export signal receptor activity"/>
    <property type="evidence" value="ECO:0000314"/>
    <property type="project" value="UniProtKB"/>
</dbReference>
<dbReference type="GO" id="GO:0019904">
    <property type="term" value="F:protein domain specific binding"/>
    <property type="evidence" value="ECO:0007669"/>
    <property type="project" value="Ensembl"/>
</dbReference>
<dbReference type="GO" id="GO:0003723">
    <property type="term" value="F:RNA binding"/>
    <property type="evidence" value="ECO:0007669"/>
    <property type="project" value="UniProtKB-KW"/>
</dbReference>
<dbReference type="GO" id="GO:0031267">
    <property type="term" value="F:small GTPase binding"/>
    <property type="evidence" value="ECO:0007669"/>
    <property type="project" value="InterPro"/>
</dbReference>
<dbReference type="GO" id="GO:1902075">
    <property type="term" value="P:cellular response to salt"/>
    <property type="evidence" value="ECO:0007669"/>
    <property type="project" value="Ensembl"/>
</dbReference>
<dbReference type="GO" id="GO:0071401">
    <property type="term" value="P:cellular response to triglyceride"/>
    <property type="evidence" value="ECO:0007669"/>
    <property type="project" value="Ensembl"/>
</dbReference>
<dbReference type="GO" id="GO:0006406">
    <property type="term" value="P:mRNA export from nucleus"/>
    <property type="evidence" value="ECO:0000250"/>
    <property type="project" value="UniProt"/>
</dbReference>
<dbReference type="GO" id="GO:0000122">
    <property type="term" value="P:negative regulation of transcription by RNA polymerase II"/>
    <property type="evidence" value="ECO:0007669"/>
    <property type="project" value="Ensembl"/>
</dbReference>
<dbReference type="GO" id="GO:0006913">
    <property type="term" value="P:nucleocytoplasmic transport"/>
    <property type="evidence" value="ECO:0000315"/>
    <property type="project" value="UniProtKB"/>
</dbReference>
<dbReference type="GO" id="GO:0006611">
    <property type="term" value="P:protein export from nucleus"/>
    <property type="evidence" value="ECO:0000314"/>
    <property type="project" value="UniProtKB"/>
</dbReference>
<dbReference type="GO" id="GO:0034504">
    <property type="term" value="P:protein localization to nucleus"/>
    <property type="evidence" value="ECO:0007669"/>
    <property type="project" value="Ensembl"/>
</dbReference>
<dbReference type="GO" id="GO:0010824">
    <property type="term" value="P:regulation of centrosome duplication"/>
    <property type="evidence" value="ECO:0007669"/>
    <property type="project" value="Ensembl"/>
</dbReference>
<dbReference type="GO" id="GO:0032434">
    <property type="term" value="P:regulation of proteasomal ubiquitin-dependent protein catabolic process"/>
    <property type="evidence" value="ECO:0000314"/>
    <property type="project" value="UniProtKB"/>
</dbReference>
<dbReference type="GO" id="GO:0046825">
    <property type="term" value="P:regulation of protein export from nucleus"/>
    <property type="evidence" value="ECO:0007669"/>
    <property type="project" value="Ensembl"/>
</dbReference>
<dbReference type="GO" id="GO:0009410">
    <property type="term" value="P:response to xenobiotic stimulus"/>
    <property type="evidence" value="ECO:0007669"/>
    <property type="project" value="Ensembl"/>
</dbReference>
<dbReference type="GO" id="GO:0000055">
    <property type="term" value="P:ribosomal large subunit export from nucleus"/>
    <property type="evidence" value="ECO:0000315"/>
    <property type="project" value="ParkinsonsUK-UCL"/>
</dbReference>
<dbReference type="GO" id="GO:0000056">
    <property type="term" value="P:ribosomal small subunit export from nucleus"/>
    <property type="evidence" value="ECO:0000315"/>
    <property type="project" value="ParkinsonsUK-UCL"/>
</dbReference>
<dbReference type="GO" id="GO:0000054">
    <property type="term" value="P:ribosomal subunit export from nucleus"/>
    <property type="evidence" value="ECO:0000315"/>
    <property type="project" value="ParkinsonsUK-UCL"/>
</dbReference>
<dbReference type="GO" id="GO:0042254">
    <property type="term" value="P:ribosome biogenesis"/>
    <property type="evidence" value="ECO:0000315"/>
    <property type="project" value="ParkinsonsUK-UCL"/>
</dbReference>
<dbReference type="FunFam" id="1.25.10.10:FF:001255">
    <property type="entry name" value="Exportin 1"/>
    <property type="match status" value="1"/>
</dbReference>
<dbReference type="Gene3D" id="1.25.10.10">
    <property type="entry name" value="Leucine-rich Repeat Variant"/>
    <property type="match status" value="1"/>
</dbReference>
<dbReference type="IDEAL" id="IID00357"/>
<dbReference type="InterPro" id="IPR011989">
    <property type="entry name" value="ARM-like"/>
</dbReference>
<dbReference type="InterPro" id="IPR016024">
    <property type="entry name" value="ARM-type_fold"/>
</dbReference>
<dbReference type="InterPro" id="IPR041123">
    <property type="entry name" value="CRM1_repeat"/>
</dbReference>
<dbReference type="InterPro" id="IPR041235">
    <property type="entry name" value="Exp1_repeat_2"/>
</dbReference>
<dbReference type="InterPro" id="IPR013598">
    <property type="entry name" value="Exportin-1/Importin-b-like"/>
</dbReference>
<dbReference type="InterPro" id="IPR001494">
    <property type="entry name" value="Importin-beta_N"/>
</dbReference>
<dbReference type="InterPro" id="IPR045065">
    <property type="entry name" value="XPO1/5"/>
</dbReference>
<dbReference type="InterPro" id="IPR014877">
    <property type="entry name" value="XPO1_C_dom"/>
</dbReference>
<dbReference type="InterPro" id="IPR040485">
    <property type="entry name" value="XPO1_repeat_3"/>
</dbReference>
<dbReference type="PANTHER" id="PTHR11223">
    <property type="entry name" value="EXPORTIN 1/5"/>
    <property type="match status" value="1"/>
</dbReference>
<dbReference type="PANTHER" id="PTHR11223:SF2">
    <property type="entry name" value="EXPORTIN-1"/>
    <property type="match status" value="1"/>
</dbReference>
<dbReference type="Pfam" id="PF08767">
    <property type="entry name" value="CRM1_C"/>
    <property type="match status" value="1"/>
</dbReference>
<dbReference type="Pfam" id="PF18777">
    <property type="entry name" value="CRM1_repeat"/>
    <property type="match status" value="1"/>
</dbReference>
<dbReference type="Pfam" id="PF18784">
    <property type="entry name" value="CRM1_repeat_2"/>
    <property type="match status" value="1"/>
</dbReference>
<dbReference type="Pfam" id="PF18787">
    <property type="entry name" value="CRM1_repeat_3"/>
    <property type="match status" value="1"/>
</dbReference>
<dbReference type="Pfam" id="PF03810">
    <property type="entry name" value="IBN_N"/>
    <property type="match status" value="1"/>
</dbReference>
<dbReference type="Pfam" id="PF08389">
    <property type="entry name" value="Xpo1"/>
    <property type="match status" value="1"/>
</dbReference>
<dbReference type="SMART" id="SM01102">
    <property type="entry name" value="CRM1_C"/>
    <property type="match status" value="1"/>
</dbReference>
<dbReference type="SMART" id="SM00913">
    <property type="entry name" value="IBN_N"/>
    <property type="match status" value="1"/>
</dbReference>
<dbReference type="SUPFAM" id="SSF48371">
    <property type="entry name" value="ARM repeat"/>
    <property type="match status" value="2"/>
</dbReference>
<dbReference type="PROSITE" id="PS50166">
    <property type="entry name" value="IMPORTIN_B_NT"/>
    <property type="match status" value="1"/>
</dbReference>
<feature type="chain" id="PRO_0000204705" description="Exportin-1">
    <location>
        <begin position="1"/>
        <end position="1071"/>
    </location>
</feature>
<feature type="domain" description="Importin N-terminal" evidence="3">
    <location>
        <begin position="46"/>
        <end position="112"/>
    </location>
</feature>
<feature type="repeat" description="HEAT 1">
    <location>
        <begin position="217"/>
        <end position="240"/>
    </location>
</feature>
<feature type="repeat" description="HEAT 2">
    <location>
        <begin position="241"/>
        <end position="277"/>
    </location>
</feature>
<feature type="repeat" description="HEAT 3">
    <location>
        <begin position="354"/>
        <end position="472"/>
    </location>
</feature>
<feature type="repeat" description="HEAT 4">
    <location>
        <begin position="515"/>
        <end position="553"/>
    </location>
</feature>
<feature type="repeat" description="HEAT 5">
    <location>
        <begin position="560"/>
        <end position="597"/>
    </location>
</feature>
<feature type="repeat" description="HEAT 6">
    <location>
        <begin position="602"/>
        <end position="639"/>
    </location>
</feature>
<feature type="repeat" description="HEAT 7">
    <location>
        <begin position="775"/>
        <end position="813"/>
    </location>
</feature>
<feature type="repeat" description="HEAT 8">
    <location>
        <begin position="885"/>
        <end position="916"/>
    </location>
</feature>
<feature type="repeat" description="HEAT 9">
    <location>
        <begin position="917"/>
        <end position="954"/>
    </location>
</feature>
<feature type="repeat" description="HEAT 10">
    <location>
        <begin position="1002"/>
        <end position="1039"/>
    </location>
</feature>
<feature type="region of interest" description="Necessary for HTLV-1 Rex-mediated mRNA export">
    <location>
        <begin position="1"/>
        <end position="679"/>
    </location>
</feature>
<feature type="region of interest" description="Interaction with Ran and nuclear export complex formation">
    <location>
        <begin position="327"/>
        <end position="450"/>
    </location>
</feature>
<feature type="region of interest" description="Interaction with RANBP3">
    <location>
        <begin position="411"/>
        <end position="481"/>
    </location>
</feature>
<feature type="region of interest" description="Necessary for HTLV-1 Rex multimerization">
    <location>
        <begin position="411"/>
        <end position="414"/>
    </location>
</feature>
<feature type="region of interest" description="Interaction with HIV-1 Rev">
    <location>
        <begin position="800"/>
        <end position="820"/>
    </location>
</feature>
<feature type="modified residue" description="Phosphoserine" evidence="40 41">
    <location>
        <position position="391"/>
    </location>
</feature>
<feature type="modified residue" description="N6-acetyllysine" evidence="39">
    <location>
        <position position="446"/>
    </location>
</feature>
<feature type="modified residue" description="Phosphothreonine" evidence="2">
    <location>
        <position position="448"/>
    </location>
</feature>
<feature type="modified residue" description="Phosphoserine" evidence="2">
    <location>
        <position position="450"/>
    </location>
</feature>
<feature type="modified residue" description="Phosphotyrosine" evidence="2">
    <location>
        <position position="454"/>
    </location>
</feature>
<feature type="modified residue" description="N6-acetyllysine" evidence="39">
    <location>
        <position position="693"/>
    </location>
</feature>
<feature type="modified residue" description="Phosphoserine" evidence="41">
    <location>
        <position position="1031"/>
    </location>
</feature>
<feature type="mutagenesis site" description="Does not abolish Rex-mediated mRNA export." evidence="14">
    <original>S</original>
    <variation>A</variation>
    <location>
        <position position="191"/>
    </location>
</feature>
<feature type="mutagenesis site" description="Does not abolish Rex-mediated mRNA export." evidence="14">
    <original>V</original>
    <variation>E</variation>
    <location>
        <position position="284"/>
    </location>
</feature>
<feature type="mutagenesis site" description="Does not abolish Rex-mediated mRNA export." evidence="14">
    <original>D</original>
    <variation>G</variation>
    <location>
        <position position="334"/>
    </location>
</feature>
<feature type="mutagenesis site" description="Does not abolish Rex-mediated mRNA export." evidence="14">
    <original>I</original>
    <variation>L</variation>
    <location>
        <position position="337"/>
    </location>
</feature>
<feature type="mutagenesis site" description="Does not abolish Rex-mediated mRNA export." evidence="14">
    <original>T</original>
    <variation>A</variation>
    <location>
        <position position="346"/>
    </location>
</feature>
<feature type="mutagenesis site" description="Does not abolish Rex-mediated mRNA export." evidence="14">
    <original>V</original>
    <variation>I</variation>
    <location>
        <position position="402"/>
    </location>
</feature>
<feature type="mutagenesis site" description="Strongly abolishes interaction with Rex and RANBP3, abolishes Rex-mediated mRNA export. Does not abolish interaction with RANBP3; when associated with S-414. Abolishes Rex multimerization; when associated with S-414." evidence="14">
    <original>P</original>
    <variation>T</variation>
    <location>
        <position position="411"/>
    </location>
</feature>
<feature type="mutagenesis site" description="Does not abolish interaction with Rex and RANBP3, and Rex-mediated mRNA export." evidence="14">
    <original>M</original>
    <variation>V</variation>
    <location>
        <position position="412"/>
    </location>
</feature>
<feature type="mutagenesis site" description="Strongly abolishes interaction with Rex and RANBP3, abolishes Rex-mediated mRNA export. Does not abolish interaction with RANBP3; when associated with T-411. Abolishes Rex multimerization; when associated with T-411." evidence="14">
    <original>F</original>
    <variation>S</variation>
    <location>
        <position position="414"/>
    </location>
</feature>
<feature type="mutagenesis site" description="Abolishes Ran binding activity in absence of cargo and abolishes partially Ran binding activity in presence of cargo." evidence="16">
    <original>EEVLVVENDQGEVVREFMKD</original>
    <variation>QQVLVVQNNQGQVVRQFMKN</variation>
    <location>
        <begin position="428"/>
        <end position="447"/>
    </location>
</feature>
<feature type="mutagenesis site" description="Partially restores Ran binding activity in presence of cargo." evidence="16">
    <original>VLVVENDQGEVVREFMK</original>
    <variation>DEDEENDQGEDEEEDDD</variation>
    <location>
        <begin position="430"/>
        <end position="446"/>
    </location>
</feature>
<feature type="mutagenesis site" description="Abolishes Ran binding activity both in absence or presence of cargo." evidence="16">
    <original>VLVV</original>
    <variation>DEDE</variation>
    <location>
        <begin position="430"/>
        <end position="433"/>
    </location>
</feature>
<feature type="mutagenesis site" description="Does not abolish Ran binding activity and nuclear export complex formation." evidence="16">
    <original>Y</original>
    <variation>A</variation>
    <location>
        <position position="454"/>
    </location>
</feature>
<feature type="mutagenesis site" description="Strongly abolishes interaction with Rex and RANBP3, abolishes Rex-mediated mRNA export." evidence="14">
    <original>R</original>
    <variation>I</variation>
    <location>
        <position position="474"/>
    </location>
</feature>
<feature type="mutagenesis site" description="Strongly abolishes interaction with Rex and RANBP3, abolishes Rex-mediated mRNA export." evidence="14">
    <original>H</original>
    <variation>Q</variation>
    <location>
        <position position="481"/>
    </location>
</feature>
<feature type="mutagenesis site" description="Abolishes Ran binding activity and nuclear export complex formation. Abolishes Ran binding activity and nuclear export complex formation; when associated with A-553 and A-554." evidence="16">
    <original>E</original>
    <variation>A</variation>
    <location>
        <position position="513"/>
    </location>
</feature>
<feature type="mutagenesis site" description="Enhances Ran binding activity and does not abolish nuclear export complex formation. Does not abolish Ran binding activity and partially abolish nuclear export complex formation; when associated with A-561. Does not abolish Ran binding activity and partially abolish nuclear export complex formation; when associated with A-568 and A-572." evidence="16">
    <original>L</original>
    <variation>A</variation>
    <location>
        <position position="525"/>
    </location>
</feature>
<feature type="mutagenesis site" description="Enhances Ran binding activity and does not abolish nuclear export complex formation; when associated with A-553 and A-590." evidence="16">
    <original>Q</original>
    <variation>A</variation>
    <location>
        <position position="550"/>
    </location>
</feature>
<feature type="mutagenesis site" description="Enhances Ran binding activity and does not abolish nuclear export complex formation; when associated with A-550 and A-590. Abolishes Ran binding activity and nuclear export complex formation; when associated with A-513 and A-554." evidence="16">
    <original>R</original>
    <variation>A</variation>
    <location>
        <position position="553"/>
    </location>
</feature>
<feature type="mutagenesis site" description="Partially abolishes Ran binding activity and does not abolish nuclear export complex formation. Abolishes Ran binding activity and nuclear export complex formation; when associated with A-561. Abolishes Ran binding activity and nuclear export complex formation; when associated with A-553 and A-513." evidence="16">
    <original>F</original>
    <variation>A</variation>
    <location>
        <position position="554"/>
    </location>
</feature>
<feature type="mutagenesis site" description="Abolishes Ran binding activity and nuclear export complex formation. Abolishes Ran binding activity and nuclear export complex formation; when associated with A-554. Does not abolish Ran binding activity and partially abolish nuclear export complex formation; when associated with A-525." evidence="16">
    <original>F</original>
    <variation>A</variation>
    <location>
        <position position="561"/>
    </location>
</feature>
<feature type="mutagenesis site" description="Does not abolish Ran binding activity and partially abolish nuclear export complex formation; when associated with A-525 and A-572." evidence="16">
    <original>K</original>
    <variation>A</variation>
    <location>
        <position position="568"/>
    </location>
</feature>
<feature type="mutagenesis site" description="Does not abolish Ran binding activity and partially abolish nuclear export complex formation; when associated with A-525 and A-568." evidence="16">
    <original>F</original>
    <variation>A</variation>
    <location>
        <position position="572"/>
    </location>
</feature>
<feature type="mutagenesis site" description="Enhances Ran binding activity; when associated with A-590." evidence="16">
    <original>M</original>
    <variation>A</variation>
    <location>
        <position position="583"/>
    </location>
</feature>
<feature type="mutagenesis site" description="Enhances Ran binding activity and does not abolish nuclear export complex formation. Enhances Ran binding activity and does not abolish nuclear export complex formation; when associated with A-583. Enhances Ran binding activity and does not abolish nuclear export complex formation; when associated with A-550 and A-553." evidence="16">
    <original>K</original>
    <variation>A</variation>
    <location>
        <position position="590"/>
    </location>
</feature>
<feature type="sequence conflict" description="In Ref. 4; CAH56174." evidence="38" ref="4">
    <original>R</original>
    <variation>G</variation>
    <location>
        <position position="406"/>
    </location>
</feature>
<feature type="sequence conflict" description="In Ref. 4; CAH18695." evidence="38" ref="4">
    <original>V</original>
    <variation>G</variation>
    <location>
        <position position="953"/>
    </location>
</feature>
<feature type="sequence conflict" description="In Ref. 4; CAH56174." evidence="38" ref="4">
    <original>L</original>
    <variation>I</variation>
    <location>
        <position position="989"/>
    </location>
</feature>
<feature type="helix" evidence="46">
    <location>
        <begin position="10"/>
        <end position="13"/>
    </location>
</feature>
<feature type="helix" evidence="46">
    <location>
        <begin position="14"/>
        <end position="17"/>
    </location>
</feature>
<feature type="strand" evidence="46">
    <location>
        <begin position="19"/>
        <end position="21"/>
    </location>
</feature>
<feature type="helix" evidence="46">
    <location>
        <begin position="25"/>
        <end position="37"/>
    </location>
</feature>
<feature type="helix" evidence="46">
    <location>
        <begin position="40"/>
        <end position="55"/>
    </location>
</feature>
<feature type="strand" evidence="45">
    <location>
        <begin position="56"/>
        <end position="58"/>
    </location>
</feature>
<feature type="helix" evidence="46">
    <location>
        <begin position="59"/>
        <end position="62"/>
    </location>
</feature>
<feature type="helix" evidence="46">
    <location>
        <begin position="63"/>
        <end position="69"/>
    </location>
</feature>
<feature type="helix" evidence="46">
    <location>
        <begin position="73"/>
        <end position="90"/>
    </location>
</feature>
<feature type="helix" evidence="46">
    <location>
        <begin position="91"/>
        <end position="93"/>
    </location>
</feature>
<feature type="helix" evidence="46">
    <location>
        <begin position="96"/>
        <end position="115"/>
    </location>
</feature>
<feature type="helix" evidence="46">
    <location>
        <begin position="117"/>
        <end position="122"/>
    </location>
</feature>
<feature type="helix" evidence="46">
    <location>
        <begin position="124"/>
        <end position="145"/>
    </location>
</feature>
<feature type="helix" evidence="46">
    <location>
        <begin position="149"/>
        <end position="159"/>
    </location>
</feature>
<feature type="helix" evidence="46">
    <location>
        <begin position="161"/>
        <end position="179"/>
    </location>
</feature>
<feature type="turn" evidence="46">
    <location>
        <begin position="183"/>
        <end position="185"/>
    </location>
</feature>
<feature type="helix" evidence="46">
    <location>
        <begin position="188"/>
        <end position="200"/>
    </location>
</feature>
<feature type="helix" evidence="46">
    <location>
        <begin position="202"/>
        <end position="215"/>
    </location>
</feature>
<feature type="helix" evidence="46">
    <location>
        <begin position="219"/>
        <end position="232"/>
    </location>
</feature>
<feature type="turn" evidence="46">
    <location>
        <begin position="233"/>
        <end position="235"/>
    </location>
</feature>
<feature type="helix" evidence="46">
    <location>
        <begin position="238"/>
        <end position="242"/>
    </location>
</feature>
<feature type="strand" evidence="46">
    <location>
        <begin position="243"/>
        <end position="245"/>
    </location>
</feature>
<feature type="helix" evidence="46">
    <location>
        <begin position="246"/>
        <end position="253"/>
    </location>
</feature>
<feature type="turn" evidence="46">
    <location>
        <begin position="254"/>
        <end position="256"/>
    </location>
</feature>
<feature type="helix" evidence="46">
    <location>
        <begin position="258"/>
        <end position="260"/>
    </location>
</feature>
<feature type="helix" evidence="46">
    <location>
        <begin position="261"/>
        <end position="273"/>
    </location>
</feature>
<feature type="helix" evidence="44">
    <location>
        <begin position="277"/>
        <end position="279"/>
    </location>
</feature>
<feature type="helix" evidence="46">
    <location>
        <begin position="280"/>
        <end position="297"/>
    </location>
</feature>
<feature type="helix" evidence="46">
    <location>
        <begin position="304"/>
        <end position="310"/>
    </location>
</feature>
<feature type="helix" evidence="46">
    <location>
        <begin position="313"/>
        <end position="338"/>
    </location>
</feature>
<feature type="helix" evidence="46">
    <location>
        <begin position="341"/>
        <end position="343"/>
    </location>
</feature>
<feature type="helix" evidence="46">
    <location>
        <begin position="344"/>
        <end position="357"/>
    </location>
</feature>
<feature type="helix" evidence="46">
    <location>
        <begin position="363"/>
        <end position="383"/>
    </location>
</feature>
<feature type="helix" evidence="46">
    <location>
        <begin position="404"/>
        <end position="409"/>
    </location>
</feature>
<feature type="turn" evidence="46">
    <location>
        <begin position="410"/>
        <end position="412"/>
    </location>
</feature>
<feature type="helix" evidence="46">
    <location>
        <begin position="413"/>
        <end position="423"/>
    </location>
</feature>
<feature type="strand" evidence="46">
    <location>
        <begin position="430"/>
        <end position="434"/>
    </location>
</feature>
<feature type="strand" evidence="46">
    <location>
        <begin position="436"/>
        <end position="438"/>
    </location>
</feature>
<feature type="strand" evidence="46">
    <location>
        <begin position="440"/>
        <end position="444"/>
    </location>
</feature>
<feature type="helix" evidence="46">
    <location>
        <begin position="449"/>
        <end position="467"/>
    </location>
</feature>
<feature type="helix" evidence="46">
    <location>
        <begin position="469"/>
        <end position="484"/>
    </location>
</feature>
<feature type="strand" evidence="43">
    <location>
        <begin position="485"/>
        <end position="488"/>
    </location>
</feature>
<feature type="helix" evidence="46">
    <location>
        <begin position="491"/>
        <end position="503"/>
    </location>
</feature>
<feature type="turn" evidence="46">
    <location>
        <begin position="504"/>
        <end position="506"/>
    </location>
</feature>
<feature type="helix" evidence="46">
    <location>
        <begin position="510"/>
        <end position="530"/>
    </location>
</feature>
<feature type="helix" evidence="46">
    <location>
        <begin position="534"/>
        <end position="549"/>
    </location>
</feature>
<feature type="helix" evidence="46">
    <location>
        <begin position="552"/>
        <end position="557"/>
    </location>
</feature>
<feature type="helix" evidence="46">
    <location>
        <begin position="559"/>
        <end position="572"/>
    </location>
</feature>
<feature type="helix" evidence="46">
    <location>
        <begin position="580"/>
        <end position="595"/>
    </location>
</feature>
<feature type="helix" evidence="46">
    <location>
        <begin position="596"/>
        <end position="599"/>
    </location>
</feature>
<feature type="strand" evidence="43">
    <location>
        <begin position="605"/>
        <end position="608"/>
    </location>
</feature>
<feature type="helix" evidence="46">
    <location>
        <begin position="610"/>
        <end position="615"/>
    </location>
</feature>
<feature type="helix" evidence="46">
    <location>
        <begin position="618"/>
        <end position="621"/>
    </location>
</feature>
<feature type="helix" evidence="46">
    <location>
        <begin position="627"/>
        <end position="642"/>
    </location>
</feature>
<feature type="helix" evidence="46">
    <location>
        <begin position="647"/>
        <end position="657"/>
    </location>
</feature>
<feature type="helix" evidence="46">
    <location>
        <begin position="659"/>
        <end position="674"/>
    </location>
</feature>
<feature type="helix" evidence="46">
    <location>
        <begin position="676"/>
        <end position="680"/>
    </location>
</feature>
<feature type="helix" evidence="46">
    <location>
        <begin position="682"/>
        <end position="702"/>
    </location>
</feature>
<feature type="helix" evidence="46">
    <location>
        <begin position="704"/>
        <end position="706"/>
    </location>
</feature>
<feature type="helix" evidence="42">
    <location>
        <begin position="711"/>
        <end position="713"/>
    </location>
</feature>
<feature type="helix" evidence="42">
    <location>
        <begin position="714"/>
        <end position="735"/>
    </location>
</feature>
<feature type="helix" evidence="42">
    <location>
        <begin position="738"/>
        <end position="741"/>
    </location>
</feature>
<feature type="helix" evidence="42">
    <location>
        <begin position="743"/>
        <end position="764"/>
    </location>
</feature>
<feature type="helix" evidence="42">
    <location>
        <begin position="769"/>
        <end position="775"/>
    </location>
</feature>
<feature type="helix" evidence="42">
    <location>
        <begin position="777"/>
        <end position="789"/>
    </location>
</feature>
<feature type="helix" evidence="42">
    <location>
        <begin position="793"/>
        <end position="795"/>
    </location>
</feature>
<feature type="helix" evidence="42">
    <location>
        <begin position="799"/>
        <end position="811"/>
    </location>
</feature>
<feature type="helix" evidence="42">
    <location>
        <begin position="812"/>
        <end position="818"/>
    </location>
</feature>
<feature type="helix" evidence="42">
    <location>
        <begin position="819"/>
        <end position="834"/>
    </location>
</feature>
<feature type="turn" evidence="42">
    <location>
        <begin position="837"/>
        <end position="839"/>
    </location>
</feature>
<feature type="helix" evidence="42">
    <location>
        <begin position="842"/>
        <end position="858"/>
    </location>
</feature>
<feature type="helix" evidence="42">
    <location>
        <begin position="862"/>
        <end position="865"/>
    </location>
</feature>
<feature type="helix" evidence="42">
    <location>
        <begin position="868"/>
        <end position="881"/>
    </location>
</feature>
<feature type="strand" evidence="43">
    <location>
        <begin position="884"/>
        <end position="886"/>
    </location>
</feature>
<feature type="helix" evidence="42">
    <location>
        <begin position="887"/>
        <end position="906"/>
    </location>
</feature>
<feature type="helix" evidence="42">
    <location>
        <begin position="908"/>
        <end position="931"/>
    </location>
</feature>
<feature type="strand" evidence="42">
    <location>
        <begin position="932"/>
        <end position="934"/>
    </location>
</feature>
<feature type="helix" evidence="45">
    <location>
        <begin position="936"/>
        <end position="938"/>
    </location>
</feature>
<feature type="helix" evidence="42">
    <location>
        <begin position="939"/>
        <end position="954"/>
    </location>
</feature>
<feature type="strand" evidence="44">
    <location>
        <begin position="961"/>
        <end position="963"/>
    </location>
</feature>
<feature type="strand" evidence="42">
    <location>
        <begin position="964"/>
        <end position="966"/>
    </location>
</feature>
<feature type="helix" evidence="42">
    <location>
        <begin position="970"/>
        <end position="985"/>
    </location>
</feature>
<feature type="helix" evidence="42">
    <location>
        <begin position="991"/>
        <end position="1003"/>
    </location>
</feature>
<feature type="turn" evidence="42">
    <location>
        <begin position="1004"/>
        <end position="1006"/>
    </location>
</feature>
<feature type="helix" evidence="42">
    <location>
        <begin position="1008"/>
        <end position="1023"/>
    </location>
</feature>
<feature type="turn" evidence="42">
    <location>
        <begin position="1024"/>
        <end position="1026"/>
    </location>
</feature>
<feature type="turn" evidence="43">
    <location>
        <begin position="1028"/>
        <end position="1030"/>
    </location>
</feature>
<feature type="helix" evidence="44">
    <location>
        <begin position="1035"/>
        <end position="1047"/>
    </location>
</feature>
<feature type="helix" evidence="43">
    <location>
        <begin position="1053"/>
        <end position="1055"/>
    </location>
</feature>
<reference key="1">
    <citation type="journal article" date="1997" name="EMBO J.">
        <title>The human homologue of yeast CRM1 is in a dynamic subcomplex with CAN/Nup214 and the novel nuclear pore component Nup88.</title>
        <authorList>
            <person name="Fornerod M."/>
            <person name="van Deursen J.M."/>
            <person name="van Baal S."/>
            <person name="Reynolds A."/>
            <person name="Davis D."/>
            <person name="Murti K.G."/>
            <person name="Fransen J."/>
            <person name="Grosveld G."/>
        </authorList>
    </citation>
    <scope>NUCLEOTIDE SEQUENCE [MRNA]</scope>
    <scope>PROTEIN SEQUENCE OF 757-765</scope>
    <scope>INTERACTION WITH NUP88 AND NUP214</scope>
    <scope>SUBCELLULAR LOCATION</scope>
    <scope>TISSUE SPECIFICITY</scope>
    <source>
        <tissue>Placenta</tissue>
    </source>
</reference>
<reference key="2">
    <citation type="journal article" date="1997" name="J. Biol. Chem.">
        <title>Molecular cloning and cell cycle-dependent expression of mammalian CRM1, a protein involved in nuclear export of proteins.</title>
        <authorList>
            <person name="Kudo N."/>
            <person name="Kohchbin S."/>
            <person name="Nishi K."/>
            <person name="Kitano K."/>
            <person name="Yanagida M."/>
            <person name="Yoshida M."/>
            <person name="Horinouchi S."/>
        </authorList>
    </citation>
    <scope>NUCLEOTIDE SEQUENCE [MRNA]</scope>
    <scope>SUBCELLULAR LOCATION</scope>
    <scope>TISSUE SPECIFICITY</scope>
    <source>
        <tissue>Chronic myeloid leukemia cell</tissue>
    </source>
</reference>
<reference key="3">
    <citation type="journal article" date="2004" name="Nat. Genet.">
        <title>Complete sequencing and characterization of 21,243 full-length human cDNAs.</title>
        <authorList>
            <person name="Ota T."/>
            <person name="Suzuki Y."/>
            <person name="Nishikawa T."/>
            <person name="Otsuki T."/>
            <person name="Sugiyama T."/>
            <person name="Irie R."/>
            <person name="Wakamatsu A."/>
            <person name="Hayashi K."/>
            <person name="Sato H."/>
            <person name="Nagai K."/>
            <person name="Kimura K."/>
            <person name="Makita H."/>
            <person name="Sekine M."/>
            <person name="Obayashi M."/>
            <person name="Nishi T."/>
            <person name="Shibahara T."/>
            <person name="Tanaka T."/>
            <person name="Ishii S."/>
            <person name="Yamamoto J."/>
            <person name="Saito K."/>
            <person name="Kawai Y."/>
            <person name="Isono Y."/>
            <person name="Nakamura Y."/>
            <person name="Nagahari K."/>
            <person name="Murakami K."/>
            <person name="Yasuda T."/>
            <person name="Iwayanagi T."/>
            <person name="Wagatsuma M."/>
            <person name="Shiratori A."/>
            <person name="Sudo H."/>
            <person name="Hosoiri T."/>
            <person name="Kaku Y."/>
            <person name="Kodaira H."/>
            <person name="Kondo H."/>
            <person name="Sugawara M."/>
            <person name="Takahashi M."/>
            <person name="Kanda K."/>
            <person name="Yokoi T."/>
            <person name="Furuya T."/>
            <person name="Kikkawa E."/>
            <person name="Omura Y."/>
            <person name="Abe K."/>
            <person name="Kamihara K."/>
            <person name="Katsuta N."/>
            <person name="Sato K."/>
            <person name="Tanikawa M."/>
            <person name="Yamazaki M."/>
            <person name="Ninomiya K."/>
            <person name="Ishibashi T."/>
            <person name="Yamashita H."/>
            <person name="Murakawa K."/>
            <person name="Fujimori K."/>
            <person name="Tanai H."/>
            <person name="Kimata M."/>
            <person name="Watanabe M."/>
            <person name="Hiraoka S."/>
            <person name="Chiba Y."/>
            <person name="Ishida S."/>
            <person name="Ono Y."/>
            <person name="Takiguchi S."/>
            <person name="Watanabe S."/>
            <person name="Yosida M."/>
            <person name="Hotuta T."/>
            <person name="Kusano J."/>
            <person name="Kanehori K."/>
            <person name="Takahashi-Fujii A."/>
            <person name="Hara H."/>
            <person name="Tanase T.-O."/>
            <person name="Nomura Y."/>
            <person name="Togiya S."/>
            <person name="Komai F."/>
            <person name="Hara R."/>
            <person name="Takeuchi K."/>
            <person name="Arita M."/>
            <person name="Imose N."/>
            <person name="Musashino K."/>
            <person name="Yuuki H."/>
            <person name="Oshima A."/>
            <person name="Sasaki N."/>
            <person name="Aotsuka S."/>
            <person name="Yoshikawa Y."/>
            <person name="Matsunawa H."/>
            <person name="Ichihara T."/>
            <person name="Shiohata N."/>
            <person name="Sano S."/>
            <person name="Moriya S."/>
            <person name="Momiyama H."/>
            <person name="Satoh N."/>
            <person name="Takami S."/>
            <person name="Terashima Y."/>
            <person name="Suzuki O."/>
            <person name="Nakagawa S."/>
            <person name="Senoh A."/>
            <person name="Mizoguchi H."/>
            <person name="Goto Y."/>
            <person name="Shimizu F."/>
            <person name="Wakebe H."/>
            <person name="Hishigaki H."/>
            <person name="Watanabe T."/>
            <person name="Sugiyama A."/>
            <person name="Takemoto M."/>
            <person name="Kawakami B."/>
            <person name="Yamazaki M."/>
            <person name="Watanabe K."/>
            <person name="Kumagai A."/>
            <person name="Itakura S."/>
            <person name="Fukuzumi Y."/>
            <person name="Fujimori Y."/>
            <person name="Komiyama M."/>
            <person name="Tashiro H."/>
            <person name="Tanigami A."/>
            <person name="Fujiwara T."/>
            <person name="Ono T."/>
            <person name="Yamada K."/>
            <person name="Fujii Y."/>
            <person name="Ozaki K."/>
            <person name="Hirao M."/>
            <person name="Ohmori Y."/>
            <person name="Kawabata A."/>
            <person name="Hikiji T."/>
            <person name="Kobatake N."/>
            <person name="Inagaki H."/>
            <person name="Ikema Y."/>
            <person name="Okamoto S."/>
            <person name="Okitani R."/>
            <person name="Kawakami T."/>
            <person name="Noguchi S."/>
            <person name="Itoh T."/>
            <person name="Shigeta K."/>
            <person name="Senba T."/>
            <person name="Matsumura K."/>
            <person name="Nakajima Y."/>
            <person name="Mizuno T."/>
            <person name="Morinaga M."/>
            <person name="Sasaki M."/>
            <person name="Togashi T."/>
            <person name="Oyama M."/>
            <person name="Hata H."/>
            <person name="Watanabe M."/>
            <person name="Komatsu T."/>
            <person name="Mizushima-Sugano J."/>
            <person name="Satoh T."/>
            <person name="Shirai Y."/>
            <person name="Takahashi Y."/>
            <person name="Nakagawa K."/>
            <person name="Okumura K."/>
            <person name="Nagase T."/>
            <person name="Nomura N."/>
            <person name="Kikuchi H."/>
            <person name="Masuho Y."/>
            <person name="Yamashita R."/>
            <person name="Nakai K."/>
            <person name="Yada T."/>
            <person name="Nakamura Y."/>
            <person name="Ohara O."/>
            <person name="Isogai T."/>
            <person name="Sugano S."/>
        </authorList>
    </citation>
    <scope>NUCLEOTIDE SEQUENCE [LARGE SCALE MRNA]</scope>
    <source>
        <tissue>Hippocampus</tissue>
    </source>
</reference>
<reference key="4">
    <citation type="journal article" date="2007" name="BMC Genomics">
        <title>The full-ORF clone resource of the German cDNA consortium.</title>
        <authorList>
            <person name="Bechtel S."/>
            <person name="Rosenfelder H."/>
            <person name="Duda A."/>
            <person name="Schmidt C.P."/>
            <person name="Ernst U."/>
            <person name="Wellenreuther R."/>
            <person name="Mehrle A."/>
            <person name="Schuster C."/>
            <person name="Bahr A."/>
            <person name="Bloecker H."/>
            <person name="Heubner D."/>
            <person name="Hoerlein A."/>
            <person name="Michel G."/>
            <person name="Wedler H."/>
            <person name="Koehrer K."/>
            <person name="Ottenwaelder B."/>
            <person name="Poustka A."/>
            <person name="Wiemann S."/>
            <person name="Schupp I."/>
        </authorList>
    </citation>
    <scope>NUCLEOTIDE SEQUENCE [LARGE SCALE MRNA]</scope>
    <source>
        <tissue>Testis</tissue>
    </source>
</reference>
<reference key="5">
    <citation type="journal article" date="2005" name="Nature">
        <title>Generation and annotation of the DNA sequences of human chromosomes 2 and 4.</title>
        <authorList>
            <person name="Hillier L.W."/>
            <person name="Graves T.A."/>
            <person name="Fulton R.S."/>
            <person name="Fulton L.A."/>
            <person name="Pepin K.H."/>
            <person name="Minx P."/>
            <person name="Wagner-McPherson C."/>
            <person name="Layman D."/>
            <person name="Wylie K."/>
            <person name="Sekhon M."/>
            <person name="Becker M.C."/>
            <person name="Fewell G.A."/>
            <person name="Delehaunty K.D."/>
            <person name="Miner T.L."/>
            <person name="Nash W.E."/>
            <person name="Kremitzki C."/>
            <person name="Oddy L."/>
            <person name="Du H."/>
            <person name="Sun H."/>
            <person name="Bradshaw-Cordum H."/>
            <person name="Ali J."/>
            <person name="Carter J."/>
            <person name="Cordes M."/>
            <person name="Harris A."/>
            <person name="Isak A."/>
            <person name="van Brunt A."/>
            <person name="Nguyen C."/>
            <person name="Du F."/>
            <person name="Courtney L."/>
            <person name="Kalicki J."/>
            <person name="Ozersky P."/>
            <person name="Abbott S."/>
            <person name="Armstrong J."/>
            <person name="Belter E.A."/>
            <person name="Caruso L."/>
            <person name="Cedroni M."/>
            <person name="Cotton M."/>
            <person name="Davidson T."/>
            <person name="Desai A."/>
            <person name="Elliott G."/>
            <person name="Erb T."/>
            <person name="Fronick C."/>
            <person name="Gaige T."/>
            <person name="Haakenson W."/>
            <person name="Haglund K."/>
            <person name="Holmes A."/>
            <person name="Harkins R."/>
            <person name="Kim K."/>
            <person name="Kruchowski S.S."/>
            <person name="Strong C.M."/>
            <person name="Grewal N."/>
            <person name="Goyea E."/>
            <person name="Hou S."/>
            <person name="Levy A."/>
            <person name="Martinka S."/>
            <person name="Mead K."/>
            <person name="McLellan M.D."/>
            <person name="Meyer R."/>
            <person name="Randall-Maher J."/>
            <person name="Tomlinson C."/>
            <person name="Dauphin-Kohlberg S."/>
            <person name="Kozlowicz-Reilly A."/>
            <person name="Shah N."/>
            <person name="Swearengen-Shahid S."/>
            <person name="Snider J."/>
            <person name="Strong J.T."/>
            <person name="Thompson J."/>
            <person name="Yoakum M."/>
            <person name="Leonard S."/>
            <person name="Pearman C."/>
            <person name="Trani L."/>
            <person name="Radionenko M."/>
            <person name="Waligorski J.E."/>
            <person name="Wang C."/>
            <person name="Rock S.M."/>
            <person name="Tin-Wollam A.-M."/>
            <person name="Maupin R."/>
            <person name="Latreille P."/>
            <person name="Wendl M.C."/>
            <person name="Yang S.-P."/>
            <person name="Pohl C."/>
            <person name="Wallis J.W."/>
            <person name="Spieth J."/>
            <person name="Bieri T.A."/>
            <person name="Berkowicz N."/>
            <person name="Nelson J.O."/>
            <person name="Osborne J."/>
            <person name="Ding L."/>
            <person name="Meyer R."/>
            <person name="Sabo A."/>
            <person name="Shotland Y."/>
            <person name="Sinha P."/>
            <person name="Wohldmann P.E."/>
            <person name="Cook L.L."/>
            <person name="Hickenbotham M.T."/>
            <person name="Eldred J."/>
            <person name="Williams D."/>
            <person name="Jones T.A."/>
            <person name="She X."/>
            <person name="Ciccarelli F.D."/>
            <person name="Izaurralde E."/>
            <person name="Taylor J."/>
            <person name="Schmutz J."/>
            <person name="Myers R.M."/>
            <person name="Cox D.R."/>
            <person name="Huang X."/>
            <person name="McPherson J.D."/>
            <person name="Mardis E.R."/>
            <person name="Clifton S.W."/>
            <person name="Warren W.C."/>
            <person name="Chinwalla A.T."/>
            <person name="Eddy S.R."/>
            <person name="Marra M.A."/>
            <person name="Ovcharenko I."/>
            <person name="Furey T.S."/>
            <person name="Miller W."/>
            <person name="Eichler E.E."/>
            <person name="Bork P."/>
            <person name="Suyama M."/>
            <person name="Torrents D."/>
            <person name="Waterston R.H."/>
            <person name="Wilson R.K."/>
        </authorList>
    </citation>
    <scope>NUCLEOTIDE SEQUENCE [LARGE SCALE GENOMIC DNA]</scope>
</reference>
<reference key="6">
    <citation type="submission" date="2005-09" db="EMBL/GenBank/DDBJ databases">
        <authorList>
            <person name="Mural R.J."/>
            <person name="Istrail S."/>
            <person name="Sutton G.G."/>
            <person name="Florea L."/>
            <person name="Halpern A.L."/>
            <person name="Mobarry C.M."/>
            <person name="Lippert R."/>
            <person name="Walenz B."/>
            <person name="Shatkay H."/>
            <person name="Dew I."/>
            <person name="Miller J.R."/>
            <person name="Flanigan M.J."/>
            <person name="Edwards N.J."/>
            <person name="Bolanos R."/>
            <person name="Fasulo D."/>
            <person name="Halldorsson B.V."/>
            <person name="Hannenhalli S."/>
            <person name="Turner R."/>
            <person name="Yooseph S."/>
            <person name="Lu F."/>
            <person name="Nusskern D.R."/>
            <person name="Shue B.C."/>
            <person name="Zheng X.H."/>
            <person name="Zhong F."/>
            <person name="Delcher A.L."/>
            <person name="Huson D.H."/>
            <person name="Kravitz S.A."/>
            <person name="Mouchard L."/>
            <person name="Reinert K."/>
            <person name="Remington K.A."/>
            <person name="Clark A.G."/>
            <person name="Waterman M.S."/>
            <person name="Eichler E.E."/>
            <person name="Adams M.D."/>
            <person name="Hunkapiller M.W."/>
            <person name="Myers E.W."/>
            <person name="Venter J.C."/>
        </authorList>
    </citation>
    <scope>NUCLEOTIDE SEQUENCE [LARGE SCALE GENOMIC DNA]</scope>
</reference>
<reference key="7">
    <citation type="journal article" date="2004" name="Genome Res.">
        <title>The status, quality, and expansion of the NIH full-length cDNA project: the Mammalian Gene Collection (MGC).</title>
        <authorList>
            <consortium name="The MGC Project Team"/>
        </authorList>
    </citation>
    <scope>NUCLEOTIDE SEQUENCE [LARGE SCALE MRNA]</scope>
    <source>
        <tissue>Testis</tissue>
    </source>
</reference>
<reference key="8">
    <citation type="submission" date="2005-06" db="UniProtKB">
        <authorList>
            <person name="Bienvenut W.V."/>
        </authorList>
    </citation>
    <scope>PROTEIN SEQUENCE OF 45-54; 63-88; 105-112; 130-139; 159-190; 246-253; 296-305; 407-415; 424-442; 459-474; 480-492; 516-531; 538-553; 675-686; 701-722; 797-810; 873-883; 996-1012 AND 1017-1038</scope>
    <scope>IDENTIFICATION BY MASS SPECTROMETRY</scope>
    <source>
        <tissue>B-cell lymphoma</tissue>
    </source>
</reference>
<reference key="9">
    <citation type="journal article" date="1997" name="Cell">
        <title>CRM1 is an export receptor for leucine-rich nuclear export signals.</title>
        <authorList>
            <person name="Fornerod M."/>
            <person name="Ohno M."/>
            <person name="Yoshida M."/>
            <person name="Mattaj I.W."/>
        </authorList>
    </citation>
    <scope>FUNCTION IN PROTEIN NUCLEAR EXPORT</scope>
    <scope>IDENTIFICATION IN A NUCLEAR EXPORT COMPLEX WITH RAN</scope>
</reference>
<reference key="10">
    <citation type="journal article" date="1997" name="Science">
        <title>Evidence for a role of CRM1 in signal-mediated nuclear protein export.</title>
        <authorList>
            <person name="Ossareh-Nazari B."/>
            <person name="Bachelerie F."/>
            <person name="Dargemont C."/>
        </authorList>
    </citation>
    <scope>FUNCTION IN PROTEIN NUCLEAR EXPORT</scope>
</reference>
<reference key="11">
    <citation type="journal article" date="1998" name="J. Biol. Chem.">
        <title>The specificity of the CRM1-Rev nuclear export signal interaction is mediated by RanGTP.</title>
        <authorList>
            <person name="Askjaer P."/>
            <person name="Jensen T.H."/>
            <person name="Nilsson J."/>
            <person name="Englmeier L."/>
            <person name="Kjems J."/>
        </authorList>
    </citation>
    <scope>FUNCTION (MICROBIAL INFECTION)</scope>
    <scope>INTERACTION WITH HIV-1 REV (MICROBIAL INFECTION)</scope>
</reference>
<reference key="12">
    <citation type="journal article" date="1999" name="J. Cell Biol.">
        <title>CRM1-mediated recycling of snurportin 1 to the cytoplasm.</title>
        <authorList>
            <person name="Paraskeva E."/>
            <person name="Izaurralde E."/>
            <person name="Bischoff F.R."/>
            <person name="Huber J."/>
            <person name="Kutay U."/>
            <person name="Hartmann E."/>
            <person name="Luehrmann R."/>
            <person name="Goerlich D."/>
        </authorList>
    </citation>
    <scope>IDENTIFICATION IN A NUCLEAR EXPORT RECEPTOR COMPLEX</scope>
    <scope>INTERACTION WITH IPO7; KPNB1 AND SNUPN</scope>
    <scope>IDENTIFICATION IN A TRIMERIC EXPORT COMPLEX WITH RAN AND SNUPN</scope>
</reference>
<reference key="13">
    <citation type="journal article" date="1999" name="J. Virol.">
        <title>Association with the cellular export receptor CRM 1 mediates function and intracellular localization of Epstein-Barr virus SM protein, a regulator of gene expression.</title>
        <authorList>
            <person name="Boyle S.M."/>
            <person name="Ruvolo V."/>
            <person name="Gupta A.K."/>
            <person name="Swaminathan S."/>
        </authorList>
    </citation>
    <scope>INTERACTION WITH EBV BMLF1 (MICROBIAL INFECTION)</scope>
</reference>
<reference key="14">
    <citation type="journal article" date="1999" name="Proc. Natl. Acad. Sci. U.S.A.">
        <title>Leptomycin B inactivates CRM1/exportin 1 by covalent modification at a cysteine residue in the central conserved region.</title>
        <authorList>
            <person name="Kudo N."/>
            <person name="Matsumori N."/>
            <person name="Taoka H."/>
            <person name="Fujiwara D."/>
            <person name="Schreiner E.P."/>
            <person name="Wolff B."/>
            <person name="Yoshida M."/>
            <person name="Horinouchi S."/>
        </authorList>
    </citation>
    <scope>INACTIVATION BY LMB</scope>
</reference>
<reference key="15">
    <citation type="journal article" date="1999" name="J. Biol. Chem.">
        <title>A new nucleoporin-like protein interacts with both HIV-1 Rev nuclear export signal and CRM-1.</title>
        <authorList>
            <person name="Farjot G."/>
            <person name="Sergeant A."/>
            <person name="Mikaelian I."/>
        </authorList>
    </citation>
    <scope>INTERACTION WITH NUP42</scope>
</reference>
<reference key="16">
    <citation type="journal article" date="2001" name="EMBO Rep.">
        <title>RanBP3 influences interactions between CRM1 and its nuclear protein export substrates.</title>
        <authorList>
            <person name="Englmeier L."/>
            <person name="Fornerod M."/>
            <person name="Bischoff F.R."/>
            <person name="Petosa C."/>
            <person name="Mattaj I.W."/>
            <person name="Kutay U."/>
        </authorList>
    </citation>
    <scope>IDENTIFICATION IN A NUCLEAR EXPORT COMPLEX WITH RANBP3 AND RAN</scope>
    <scope>INTERACTION WITH RANBP3</scope>
</reference>
<reference key="17">
    <citation type="journal article" date="2001" name="J. Virol.">
        <title>Interaction of the influenza virus nucleoprotein with the cellular CRM1-mediated nuclear export pathway.</title>
        <authorList>
            <person name="Elton D."/>
            <person name="Simpson-Holley M."/>
            <person name="Archer K."/>
            <person name="Medcalf L."/>
            <person name="Hallam R."/>
            <person name="McCauley J."/>
            <person name="Digard P."/>
        </authorList>
    </citation>
    <scope>INTERACTION WITH INFLUENZA A NUCLEOPROTEIN (MICROBIAL INFECTION)</scope>
</reference>
<reference key="18">
    <citation type="journal article" date="2001" name="J. Cell Biol.">
        <title>Ran-binding protein 3 is a cofactor for Crm1-mediated nuclear protein export.</title>
        <authorList>
            <person name="Lindsay M.E."/>
            <person name="Holaska J.M."/>
            <person name="Welch K."/>
            <person name="Paschal B.M."/>
            <person name="Macara I.G."/>
        </authorList>
    </citation>
    <scope>IDENTIFICATION IN A NUCLEAR EXPORT COMPLEX WITH RANBP3 AND RAN</scope>
    <scope>INTERACTION WITH RANBP3</scope>
</reference>
<reference key="19">
    <citation type="journal article" date="2002" name="J. Biol. Chem.">
        <title>Ran-binding protein 3 links Crm1 to the Ran guanine nucleotide exchange factor.</title>
        <authorList>
            <person name="Nemergut M.E."/>
            <person name="Lindsay M.E."/>
            <person name="Brownawell A.M."/>
            <person name="Macara I.G."/>
        </authorList>
    </citation>
    <scope>INTERACTION WITH RANBP3</scope>
</reference>
<reference key="20">
    <citation type="journal article" date="2002" name="J. Virol.">
        <title>The carboxy-terminal region of the human immunodeficiency virus type 1 protein Rev has multiple roles in mediating CRM1-related Rev functions.</title>
        <authorList>
            <person name="Hakata Y."/>
            <person name="Yamada M."/>
            <person name="Mabuchi N."/>
            <person name="Shida H."/>
        </authorList>
    </citation>
    <scope>INTERACTION WITH HIV-1 REV (MICROBIAL INFECTION)</scope>
</reference>
<reference key="21">
    <citation type="journal article" date="2003" name="J. Cell Sci.">
        <title>Biogenesis and nuclear export of ribosomal subunits in higher eukaryotes depend on the CRM1 export pathway.</title>
        <authorList>
            <person name="Thomas F."/>
            <person name="Kutay U."/>
        </authorList>
    </citation>
    <scope>IDENTIFICATION IN A 60S RIBOSOMAL SUBUNIT COMPLEX WITH RAN AND NMD3</scope>
    <scope>INTERACTION WITH NMD3</scope>
</reference>
<reference key="22">
    <citation type="journal article" date="2003" name="Mol. Cell. Biol.">
        <title>Hydrogen peroxide triggers nuclear export of telomerase reverse transcriptase via Src kinase family-dependent phosphorylation of tyrosine 707.</title>
        <authorList>
            <person name="Haendeler J."/>
            <person name="Hoffmann J."/>
            <person name="Brandes R.P."/>
            <person name="Zeiher A.M."/>
            <person name="Dimmeler S."/>
        </authorList>
    </citation>
    <scope>INTERACTION WITH TERT</scope>
</reference>
<reference key="23">
    <citation type="journal article" date="2003" name="Mol. Cell. Biol.">
        <title>A multifunctional domain in human CRM1 (exportin 1) mediates RanBP3 binding and multimerization of human T-cell leukemia virus type 1 Rex protein.</title>
        <authorList>
            <person name="Hakata Y."/>
            <person name="Yamada M."/>
            <person name="Shida H."/>
        </authorList>
    </citation>
    <scope>FUNCTION (MICROBIAL INFECTION)</scope>
    <scope>IDENTIFICATION IN A COMPLEX WITH HTLV-1 REX; RANBP3 AND RAN</scope>
    <scope>INTERACTION WITH HTLV-1 REX (MICROBIAL INFECTION) AND RANBP3</scope>
    <scope>MUTAGENESIS OF SER-191; VAL-284; ASP-334; ILE-337; THR-346; VAL-402; PRO-411; MET-412; PHE-414; ARG-474 AND HIS-481</scope>
</reference>
<reference key="24">
    <citation type="journal article" date="2004" name="Cell">
        <title>Requirement of DDX3 DEAD box RNA helicase for HIV-1 Rev-RRE export function.</title>
        <authorList>
            <person name="Yedavalli V.S."/>
            <person name="Neuveut C."/>
            <person name="Chi Y.-H."/>
            <person name="Kleiman L."/>
            <person name="Jeang K.-T."/>
        </authorList>
    </citation>
    <scope>INTERACTION WITH DDX3X</scope>
</reference>
<reference key="25">
    <citation type="journal article" date="2004" name="Mol. Cell">
        <title>PHAX and CRM1 are required sequentially to transport U3 snoRNA to nucleoli.</title>
        <authorList>
            <person name="Boulon S."/>
            <person name="Verheggen C."/>
            <person name="Jady B.E."/>
            <person name="Girard C."/>
            <person name="Pescia C."/>
            <person name="Paul C."/>
            <person name="Ospina J.K."/>
            <person name="Kiss T."/>
            <person name="Matera A.G."/>
            <person name="Bordonne R."/>
            <person name="Bertrand E."/>
        </authorList>
    </citation>
    <scope>FUNCTION IN U3 SNORNA TRANSPORT</scope>
    <scope>SUBCELLULAR LOCATION</scope>
    <scope>RNA-BINDING</scope>
</reference>
<reference key="26">
    <citation type="journal article" date="2005" name="Mol. Cell. Biol.">
        <title>Kinetic and molecular analysis of nuclear export factor CRM1 association with its cargo in vivo.</title>
        <authorList>
            <person name="Daelemans D."/>
            <person name="Costes S.V."/>
            <person name="Lockett S."/>
            <person name="Pavlakis G.N."/>
        </authorList>
    </citation>
    <scope>INTERACTION WITH HIV-1 REV (MICROBIAL INFECTION)</scope>
    <scope>SUBCELLULAR LOCATION</scope>
</reference>
<reference key="27">
    <citation type="journal article" date="2005" name="Oncogene">
        <title>Drosophila caliban, a nuclear export mediator, can function as a tumor suppressor in human lung cancer cells.</title>
        <authorList>
            <person name="Bi X."/>
            <person name="Jones T."/>
            <person name="Abbasi F."/>
            <person name="Lee H."/>
            <person name="Stultz B."/>
            <person name="Hursh D.A."/>
            <person name="Mortin M.A."/>
        </authorList>
    </citation>
    <scope>INTERACTION WITH NEMF</scope>
</reference>
<reference key="28">
    <citation type="journal article" date="2006" name="Mol. Carcinog.">
        <title>Nuclear translocation of the pro-apoptotic Bcl-2 family member Bok induces apoptosis.</title>
        <authorList>
            <person name="Bartholomeusz G."/>
            <person name="Wu Y."/>
            <person name="Ali Seyed M."/>
            <person name="Xia W."/>
            <person name="Kwong K.Y."/>
            <person name="Hortobagyi G."/>
            <person name="Hung M.C."/>
        </authorList>
    </citation>
    <scope>INTERACTION WITH BOK</scope>
</reference>
<reference key="29">
    <citation type="journal article" date="2006" name="Nat. Biotechnol.">
        <title>A probability-based approach for high-throughput protein phosphorylation analysis and site localization.</title>
        <authorList>
            <person name="Beausoleil S.A."/>
            <person name="Villen J."/>
            <person name="Gerber S.A."/>
            <person name="Rush J."/>
            <person name="Gygi S.P."/>
        </authorList>
    </citation>
    <scope>IDENTIFICATION BY MASS SPECTROMETRY [LARGE SCALE ANALYSIS]</scope>
    <source>
        <tissue>Cervix carcinoma</tissue>
    </source>
</reference>
<reference key="30">
    <citation type="journal article" date="2008" name="J. Biol. Chem.">
        <title>CRM1-mediated nuclear export is required for 26 S proteasome-dependent degradation of the TRIP-Br2 proto-oncoprotein.</title>
        <authorList>
            <person name="Cheong J.K."/>
            <person name="Gunaratnam L."/>
            <person name="Hsu S.I."/>
        </authorList>
    </citation>
    <scope>INTERACTION WITH SERTAD2</scope>
</reference>
<reference key="31">
    <citation type="journal article" date="2008" name="Mol. Cell">
        <title>Kinase-selective enrichment enables quantitative phosphoproteomics of the kinome across the cell cycle.</title>
        <authorList>
            <person name="Daub H."/>
            <person name="Olsen J.V."/>
            <person name="Bairlein M."/>
            <person name="Gnad F."/>
            <person name="Oppermann F.S."/>
            <person name="Korner R."/>
            <person name="Greff Z."/>
            <person name="Keri G."/>
            <person name="Stemmann O."/>
            <person name="Mann M."/>
        </authorList>
    </citation>
    <scope>IDENTIFICATION BY MASS SPECTROMETRY [LARGE SCALE ANALYSIS]</scope>
    <source>
        <tissue>Cervix carcinoma</tissue>
    </source>
</reference>
<reference key="32">
    <citation type="journal article" date="2008" name="Proc. Natl. Acad. Sci. U.S.A.">
        <title>A quantitative atlas of mitotic phosphorylation.</title>
        <authorList>
            <person name="Dephoure N."/>
            <person name="Zhou C."/>
            <person name="Villen J."/>
            <person name="Beausoleil S.A."/>
            <person name="Bakalarski C.E."/>
            <person name="Elledge S.J."/>
            <person name="Gygi S.P."/>
        </authorList>
    </citation>
    <scope>IDENTIFICATION BY MASS SPECTROMETRY [LARGE SCALE ANALYSIS]</scope>
    <source>
        <tissue>Cervix carcinoma</tissue>
    </source>
</reference>
<reference key="33">
    <citation type="journal article" date="2009" name="Science">
        <title>Lysine acetylation targets protein complexes and co-regulates major cellular functions.</title>
        <authorList>
            <person name="Choudhary C."/>
            <person name="Kumar C."/>
            <person name="Gnad F."/>
            <person name="Nielsen M.L."/>
            <person name="Rehman M."/>
            <person name="Walther T.C."/>
            <person name="Olsen J.V."/>
            <person name="Mann M."/>
        </authorList>
    </citation>
    <scope>ACETYLATION [LARGE SCALE ANALYSIS] AT LYS-446 AND LYS-693</scope>
    <scope>IDENTIFICATION BY MASS SPECTROMETRY [LARGE SCALE ANALYSIS]</scope>
</reference>
<reference key="34">
    <citation type="journal article" date="2010" name="J. Biol. Chem.">
        <title>Acetylation directs survivin nuclear localization to repress STAT3 oncogenic activity.</title>
        <authorList>
            <person name="Wang H."/>
            <person name="Holloway M.P."/>
            <person name="Ma L."/>
            <person name="Cooper Z.A."/>
            <person name="Riolo M."/>
            <person name="Samkari A."/>
            <person name="Elenitoba-Johnson K.S."/>
            <person name="Chin Y.E."/>
            <person name="Altura R.A."/>
        </authorList>
    </citation>
    <scope>INTERACTION WITH BIRC5/SURVIVIN</scope>
</reference>
<reference key="35">
    <citation type="journal article" date="2010" name="J. Virol.">
        <title>Venezuelan equine encephalitis virus capsid protein forms a tetrameric complex with CRM1 and importin alpha/beta that obstructs nuclear pore complex function.</title>
        <authorList>
            <person name="Atasheva S."/>
            <person name="Fish A."/>
            <person name="Fornerod M."/>
            <person name="Frolova E.I."/>
        </authorList>
    </citation>
    <scope>IDENTIFICATION IN COMPLEX WITH CRM1 AND VENEZUELAN EQUINE ENCEPHALITIS VIRUS CAPSID PROTEIN (MICROBIAL INFECTION)</scope>
</reference>
<reference key="36">
    <citation type="journal article" date="2010" name="J. Biol. Chem.">
        <title>Nucleocytoplasmic shuttling of dysbindin-1, a schizophrenia-related protein, regulates synapsin I expression.</title>
        <authorList>
            <person name="Fei E."/>
            <person name="Ma X."/>
            <person name="Zhu C."/>
            <person name="Xue T."/>
            <person name="Yan J."/>
            <person name="Xu Y."/>
            <person name="Zhou J."/>
            <person name="Wang G."/>
        </authorList>
    </citation>
    <scope>INTERACTION WITH DTNBP1</scope>
    <scope>FUNCTION</scope>
</reference>
<reference key="37">
    <citation type="journal article" date="2010" name="Sci. Signal.">
        <title>Quantitative phosphoproteomics reveals widespread full phosphorylation site occupancy during mitosis.</title>
        <authorList>
            <person name="Olsen J.V."/>
            <person name="Vermeulen M."/>
            <person name="Santamaria A."/>
            <person name="Kumar C."/>
            <person name="Miller M.L."/>
            <person name="Jensen L.J."/>
            <person name="Gnad F."/>
            <person name="Cox J."/>
            <person name="Jensen T.S."/>
            <person name="Nigg E.A."/>
            <person name="Brunak S."/>
            <person name="Mann M."/>
        </authorList>
    </citation>
    <scope>PHOSPHORYLATION [LARGE SCALE ANALYSIS] AT SER-391</scope>
    <scope>IDENTIFICATION BY MASS SPECTROMETRY [LARGE SCALE ANALYSIS]</scope>
    <source>
        <tissue>Cervix carcinoma</tissue>
    </source>
</reference>
<reference key="38">
    <citation type="journal article" date="2011" name="BMC Syst. Biol.">
        <title>Initial characterization of the human central proteome.</title>
        <authorList>
            <person name="Burkard T.R."/>
            <person name="Planyavsky M."/>
            <person name="Kaupe I."/>
            <person name="Breitwieser F.P."/>
            <person name="Buerckstuemmer T."/>
            <person name="Bennett K.L."/>
            <person name="Superti-Furga G."/>
            <person name="Colinge J."/>
        </authorList>
    </citation>
    <scope>IDENTIFICATION BY MASS SPECTROMETRY [LARGE SCALE ANALYSIS]</scope>
</reference>
<reference key="39">
    <citation type="journal article" date="2011" name="PLoS ONE">
        <title>An interaction network predicted from public data as a discovery tool: application to the Hsp90 molecular chaperone machine.</title>
        <authorList>
            <person name="Echeverria P.C."/>
            <person name="Bernthaler A."/>
            <person name="Dupuis P."/>
            <person name="Mayer B."/>
            <person name="Picard D."/>
        </authorList>
    </citation>
    <scope>INTERACTION WITH HSP90AB1</scope>
</reference>
<reference key="40">
    <citation type="journal article" date="2011" name="PLoS ONE">
        <title>SARS-CoV 9b protein diffuses into nucleus, undergoes active Crm1 mediated nucleocytoplasmic export and triggers apoptosis when retained in the nucleus.</title>
        <authorList>
            <person name="Sharma K."/>
            <person name="Aakerstroem S."/>
            <person name="Sharma A.K."/>
            <person name="Chow V.T."/>
            <person name="Teow S."/>
            <person name="Abrenica B."/>
            <person name="Booth S.A."/>
            <person name="Booth T.F."/>
            <person name="Mirazimi A."/>
            <person name="Lal S.K."/>
        </authorList>
    </citation>
    <scope>INTERACTION WITH SARS-COV VIRUS PROTEIN ORF9B (MICROBIAL INFECTION)</scope>
</reference>
<reference key="41">
    <citation type="journal article" date="2012" name="FEBS Lett.">
        <title>Characterization of nuclear import and export signals determining the subcellular localization of WD repeat-containing protein 42A (WDR42A).</title>
        <authorList>
            <person name="Wu F."/>
            <person name="Wang S."/>
            <person name="Xing J."/>
            <person name="Li M."/>
            <person name="Zheng C."/>
        </authorList>
    </citation>
    <scope>INTERACTION WITH DCAF8</scope>
</reference>
<reference key="42">
    <citation type="journal article" date="2011" name="Proc. Natl. Acad. Sci. U.S.A.">
        <title>POST, partner of stromal interaction molecule 1 (STIM1), targets STIM1 to multiple transporters.</title>
        <authorList>
            <person name="Krapivinsky G."/>
            <person name="Krapivinsky L."/>
            <person name="Stotz S.C."/>
            <person name="Manasian Y."/>
            <person name="Clapham D.E."/>
        </authorList>
    </citation>
    <scope>INTERACTION WITH SLC35G1 AND STIM1</scope>
</reference>
<reference key="43">
    <citation type="journal article" date="2012" name="J. Biol. Chem.">
        <title>Critical role of N-terminal end-localized nuclear export signal in regulation of activating transcription factor 2 (ATF2) subcellular localization and transcriptional activity.</title>
        <authorList>
            <person name="Hsu C.C."/>
            <person name="Hu C.D."/>
        </authorList>
    </citation>
    <scope>INTERACTION WITH ATF2</scope>
</reference>
<reference key="44">
    <citation type="journal article" date="2012" name="Nucleic Acids Res.">
        <title>NMDAR signaling facilitates the IPO5-mediated nuclear import of CPEB3.</title>
        <authorList>
            <person name="Chao H.W."/>
            <person name="Lai Y.T."/>
            <person name="Lu Y.L."/>
            <person name="Lin C.L."/>
            <person name="Mai W."/>
            <person name="Huang Y.S."/>
        </authorList>
    </citation>
    <scope>INTERACTION WITH CPEB3</scope>
</reference>
<reference key="45">
    <citation type="journal article" date="2013" name="FEBS J.">
        <title>HAX-1 is a nucleocytoplasmic shuttling protein with a possible role in mRNA processing.</title>
        <authorList>
            <person name="Grzybowska E.A."/>
            <person name="Zayat V."/>
            <person name="Konopinski R."/>
            <person name="Trebinska A."/>
            <person name="Szwarc M."/>
            <person name="Sarnowska E."/>
            <person name="Macech E."/>
            <person name="Korczynski J."/>
            <person name="Knapp A."/>
            <person name="Siedlecki J.A."/>
        </authorList>
    </citation>
    <scope>INTERACTION WITH HAX1</scope>
</reference>
<reference key="46">
    <citation type="journal article" date="2013" name="J. Proteome Res.">
        <title>Toward a comprehensive characterization of a human cancer cell phosphoproteome.</title>
        <authorList>
            <person name="Zhou H."/>
            <person name="Di Palma S."/>
            <person name="Preisinger C."/>
            <person name="Peng M."/>
            <person name="Polat A.N."/>
            <person name="Heck A.J."/>
            <person name="Mohammed S."/>
        </authorList>
    </citation>
    <scope>PHOSPHORYLATION [LARGE SCALE ANALYSIS] AT SER-391 AND SER-1031</scope>
    <scope>IDENTIFICATION BY MASS SPECTROMETRY [LARGE SCALE ANALYSIS]</scope>
    <source>
        <tissue>Cervix carcinoma</tissue>
        <tissue>Erythroleukemia</tissue>
    </source>
</reference>
<reference key="47">
    <citation type="journal article" date="2014" name="J. Proteomics">
        <title>An enzyme assisted RP-RPLC approach for in-depth analysis of human liver phosphoproteome.</title>
        <authorList>
            <person name="Bian Y."/>
            <person name="Song C."/>
            <person name="Cheng K."/>
            <person name="Dong M."/>
            <person name="Wang F."/>
            <person name="Huang J."/>
            <person name="Sun D."/>
            <person name="Wang L."/>
            <person name="Ye M."/>
            <person name="Zou H."/>
        </authorList>
    </citation>
    <scope>IDENTIFICATION BY MASS SPECTROMETRY [LARGE SCALE ANALYSIS]</scope>
    <source>
        <tissue>Liver</tissue>
    </source>
</reference>
<reference key="48">
    <citation type="journal article" date="2015" name="Proteomics">
        <title>N-terminome analysis of the human mitochondrial proteome.</title>
        <authorList>
            <person name="Vaca Jacome A.S."/>
            <person name="Rabilloud T."/>
            <person name="Schaeffer-Reiss C."/>
            <person name="Rompais M."/>
            <person name="Ayoub D."/>
            <person name="Lane L."/>
            <person name="Bairoch A."/>
            <person name="Van Dorsselaer A."/>
            <person name="Carapito C."/>
        </authorList>
    </citation>
    <scope>IDENTIFICATION BY MASS SPECTROMETRY [LARGE SCALE ANALYSIS]</scope>
</reference>
<reference key="49">
    <citation type="journal article" date="2017" name="RNA">
        <title>A biochemical framework for eIF4E-dependent mRNA export and nuclear recycling of the export machinery.</title>
        <authorList>
            <person name="Volpon L."/>
            <person name="Culjkovic-Kraljacic B."/>
            <person name="Sohn H.S."/>
            <person name="Blanchet-Cohen A."/>
            <person name="Osborne M.J."/>
            <person name="Borden K.L.B."/>
        </authorList>
    </citation>
    <scope>INTERACTION WITH LRPPRC</scope>
</reference>
<reference key="50">
    <citation type="journal article" date="2004" name="Mol. Cell">
        <title>Architecture of CRM1/Exportin1 suggests how cooperativity is achieved during formation of a nuclear export complex.</title>
        <authorList>
            <person name="Petosa C."/>
            <person name="Schoehn G."/>
            <person name="Askjaer P."/>
            <person name="Bauer U."/>
            <person name="Moulin M."/>
            <person name="Steuerwald U."/>
            <person name="Soler-Lopez M."/>
            <person name="Baudin F."/>
            <person name="Mattaj I.W."/>
            <person name="Mueller C.W."/>
        </authorList>
    </citation>
    <scope>X-RAY CRYSTALLOGRAPHY (2.3 ANGSTROMS) OF 707-1027</scope>
    <scope>ELECTRON MICROSCOPY (22 ANGSTROMS)</scope>
    <scope>IDENTIFICATION IN A NUCLEAR EXPORT COMPLEX WITH RAN</scope>
    <scope>MUTAGENESIS OF 428-GLU--ASP-447; 430-VAL--LYS-446; 430-VAL--VAL-433; TYR-454; GLU-513; LEU-525; GLN-550; ARG-553; PHE-554; PHE-561; LYS-568; PHE-572; MET-583 AND LYS-590</scope>
</reference>
<evidence type="ECO:0000250" key="1">
    <source>
        <dbReference type="UniProtKB" id="Q6P5F9"/>
    </source>
</evidence>
<evidence type="ECO:0000250" key="2">
    <source>
        <dbReference type="UniProtKB" id="Q80U96"/>
    </source>
</evidence>
<evidence type="ECO:0000255" key="3">
    <source>
        <dbReference type="PROSITE-ProRule" id="PRU00115"/>
    </source>
</evidence>
<evidence type="ECO:0000269" key="4">
    <source>
    </source>
</evidence>
<evidence type="ECO:0000269" key="5">
    <source>
    </source>
</evidence>
<evidence type="ECO:0000269" key="6">
    <source>
    </source>
</evidence>
<evidence type="ECO:0000269" key="7">
    <source>
    </source>
</evidence>
<evidence type="ECO:0000269" key="8">
    <source>
    </source>
</evidence>
<evidence type="ECO:0000269" key="9">
    <source>
    </source>
</evidence>
<evidence type="ECO:0000269" key="10">
    <source>
    </source>
</evidence>
<evidence type="ECO:0000269" key="11">
    <source>
    </source>
</evidence>
<evidence type="ECO:0000269" key="12">
    <source>
    </source>
</evidence>
<evidence type="ECO:0000269" key="13">
    <source>
    </source>
</evidence>
<evidence type="ECO:0000269" key="14">
    <source>
    </source>
</evidence>
<evidence type="ECO:0000269" key="15">
    <source>
    </source>
</evidence>
<evidence type="ECO:0000269" key="16">
    <source>
    </source>
</evidence>
<evidence type="ECO:0000269" key="17">
    <source>
    </source>
</evidence>
<evidence type="ECO:0000269" key="18">
    <source>
    </source>
</evidence>
<evidence type="ECO:0000269" key="19">
    <source>
    </source>
</evidence>
<evidence type="ECO:0000269" key="20">
    <source>
    </source>
</evidence>
<evidence type="ECO:0000269" key="21">
    <source>
    </source>
</evidence>
<evidence type="ECO:0000269" key="22">
    <source>
    </source>
</evidence>
<evidence type="ECO:0000269" key="23">
    <source>
    </source>
</evidence>
<evidence type="ECO:0000269" key="24">
    <source>
    </source>
</evidence>
<evidence type="ECO:0000269" key="25">
    <source>
    </source>
</evidence>
<evidence type="ECO:0000269" key="26">
    <source>
    </source>
</evidence>
<evidence type="ECO:0000269" key="27">
    <source>
    </source>
</evidence>
<evidence type="ECO:0000269" key="28">
    <source>
    </source>
</evidence>
<evidence type="ECO:0000269" key="29">
    <source>
    </source>
</evidence>
<evidence type="ECO:0000269" key="30">
    <source>
    </source>
</evidence>
<evidence type="ECO:0000269" key="31">
    <source>
    </source>
</evidence>
<evidence type="ECO:0000269" key="32">
    <source>
    </source>
</evidence>
<evidence type="ECO:0000269" key="33">
    <source>
    </source>
</evidence>
<evidence type="ECO:0000269" key="34">
    <source>
    </source>
</evidence>
<evidence type="ECO:0000269" key="35">
    <source>
    </source>
</evidence>
<evidence type="ECO:0000269" key="36">
    <source>
    </source>
</evidence>
<evidence type="ECO:0000269" key="37">
    <source>
    </source>
</evidence>
<evidence type="ECO:0000305" key="38"/>
<evidence type="ECO:0007744" key="39">
    <source>
    </source>
</evidence>
<evidence type="ECO:0007744" key="40">
    <source>
    </source>
</evidence>
<evidence type="ECO:0007744" key="41">
    <source>
    </source>
</evidence>
<evidence type="ECO:0007829" key="42">
    <source>
        <dbReference type="PDB" id="1W9C"/>
    </source>
</evidence>
<evidence type="ECO:0007829" key="43">
    <source>
        <dbReference type="PDB" id="3GB8"/>
    </source>
</evidence>
<evidence type="ECO:0007829" key="44">
    <source>
        <dbReference type="PDB" id="5DIS"/>
    </source>
</evidence>
<evidence type="ECO:0007829" key="45">
    <source>
        <dbReference type="PDB" id="6TVO"/>
    </source>
</evidence>
<evidence type="ECO:0007829" key="46">
    <source>
        <dbReference type="PDB" id="7B51"/>
    </source>
</evidence>
<comment type="function">
    <text evidence="17 24 34 35">Mediates the nuclear export of cellular proteins (cargos) bearing a leucine-rich nuclear export signal (NES) and of RNAs. In the nucleus, in association with RANBP3, binds cooperatively to the NES on its target protein and to the GTPase RAN in its active GTP-bound form (Ran-GTP). Docking of this complex to the nuclear pore complex (NPC) is mediated through binding to nucleoporins. Upon transit of a nuclear export complex into the cytoplasm, disassembling of the complex and hydrolysis of Ran-GTP to Ran-GDP (induced by RANBP1 and RANGAP1, respectively) cause release of the cargo from the export receptor. The directionality of nuclear export is thought to be conferred by an asymmetric distribution of the GTP- and GDP-bound forms of Ran between the cytoplasm and nucleus. Involved in U3 snoRNA transport from Cajal bodies to nucleoli. Binds to late precursor U3 snoRNA bearing a TMG cap.</text>
</comment>
<comment type="function">
    <text evidence="14 37">(Microbial infection) Mediates the export of unspliced or incompletely spliced RNAs out of the nucleus from different viruses including HIV-1, HTLV-1 and influenza A. Interacts with, and mediates the nuclear export of HIV-1 Rev and HTLV-1 Rex proteins. Involved in HTLV-1 Rex multimerization.</text>
</comment>
<comment type="subunit">
    <text evidence="1 4 5 8 9 10 12 13 14 15 16 19 20 21 23 24 26 27 28 29 30 31 32 33 35">Found in a U snRNA export complex with PHAX/RNUXA, NCBP1/CBP80, NCBP2/CBP20, RAN, XPO1 and m7G-capped RNA (By similarity). Component of a nuclear export receptor complex composed of KPNB1, RAN, SNUPN and XPO1. Found in a trimeric export complex with SNUPN, RAN and XPO1. Found in a nuclear export complex with RANBP3 and RAN. Found in a 60S ribosomal subunit export complex with NMD3, RAN, XPO1. Interacts with DDX3X, NMD3, NUP42, NUP88, NUP214, RANBP3 and TERT. Interacts with NEMF (via its N-terminus). Interacts with the monomeric form of BIRC5/survivin deacetylated at 'Lys-129'. Interacts with DTNBP1 and SERTAD2; the interactions translocate DTNBP1 and SERTAD2 out of the nucleus. Interacts with ATF2. Interacts with SLC35G1 and STIM1. Interacts with DCAF8. Interacts with CPEB3 (PubMed:22730302). Interacts with HAX1 (PubMed:23164465). Interacts with BOK; translocates to the cytoplasm (PubMed:16302269). Interacts with HSP90AB1 (PubMed:22022502). Interacts with LRPPRC; interacts with LRPPRC alone and also when LRPPRC is in complex with EIF4E and with EIF4E sensitivity element (4ESE)-containing mRNAs to form an EIF4E-dependent mRNA export complex (PubMed:28325843).</text>
</comment>
<comment type="subunit">
    <text evidence="11 18 37">(Microbial infection) Interacts with HIV-1 Rev.</text>
</comment>
<comment type="subunit">
    <text evidence="14">(Microbial infection) Interacts with HTLV-1 Rex.</text>
</comment>
<comment type="subunit">
    <text evidence="7">(Microbial infection) Interacts with influenza A nucleoprotein.</text>
</comment>
<comment type="subunit">
    <text evidence="6">(Microbial infection) Interacts with Epstein-Barr virus protein BMLF1.</text>
</comment>
<comment type="subunit">
    <text evidence="22">(Microbial infection) Part of a tetrameric complex composed of CRM1, importin alpha/beta dimer and the Venezuelan equine encephalitis virus (VEEV) capsid; this complex blocks the receptor-mediated transport through the nuclear pore.</text>
</comment>
<comment type="subunit">
    <text evidence="25">(Microbial infection) Interacts with SARS-CoV virus protein ORF9b; this interaction mediates protein ORF9b export out of the nucleus.</text>
</comment>
<comment type="interaction">
    <interactant intactId="EBI-355867">
        <id>O14980</id>
    </interactant>
    <interactant intactId="EBI-518823">
        <id>O15392</id>
        <label>BIRC5</label>
    </interactant>
    <organismsDiffer>false</organismsDiffer>
    <experiments>2</experiments>
</comment>
<comment type="interaction">
    <interactant intactId="EBI-355867">
        <id>O14980</id>
    </interactant>
    <interactant intactId="EBI-352022">
        <id>Q08211</id>
        <label>DHX9</label>
    </interactant>
    <organismsDiffer>false</organismsDiffer>
    <experiments>3</experiments>
</comment>
<comment type="interaction">
    <interactant intactId="EBI-355867">
        <id>O14980</id>
    </interactant>
    <interactant intactId="EBI-641062">
        <id>P04626</id>
        <label>ERBB2</label>
    </interactant>
    <organismsDiffer>false</organismsDiffer>
    <experiments>3</experiments>
</comment>
<comment type="interaction">
    <interactant intactId="EBI-355867">
        <id>O14980</id>
    </interactant>
    <interactant intactId="EBI-721550">
        <id>P22736</id>
        <label>NR4A1</label>
    </interactant>
    <organismsDiffer>false</organismsDiffer>
    <experiments>2</experiments>
</comment>
<comment type="interaction">
    <interactant intactId="EBI-355867">
        <id>O14980</id>
    </interactant>
    <interactant intactId="EBI-354213">
        <id>P35232</id>
        <label>PHB1</label>
    </interactant>
    <organismsDiffer>false</organismsDiffer>
    <experiments>2</experiments>
</comment>
<comment type="interaction">
    <interactant intactId="EBI-355867">
        <id>O14980</id>
    </interactant>
    <interactant intactId="EBI-2682139">
        <id>P61925</id>
        <label>PKIA</label>
    </interactant>
    <organismsDiffer>false</organismsDiffer>
    <experiments>2</experiments>
</comment>
<comment type="interaction">
    <interactant intactId="EBI-355867">
        <id>O14980</id>
    </interactant>
    <interactant intactId="EBI-992720">
        <id>P18754</id>
        <label>RCC1</label>
    </interactant>
    <organismsDiffer>false</organismsDiffer>
    <experiments>2</experiments>
</comment>
<comment type="interaction">
    <interactant intactId="EBI-355867">
        <id>O14980</id>
    </interactant>
    <interactant intactId="EBI-714033">
        <id>O95149</id>
        <label>SNUPN</label>
    </interactant>
    <organismsDiffer>false</organismsDiffer>
    <experiments>8</experiments>
</comment>
<comment type="interaction">
    <interactant intactId="EBI-355867">
        <id>O14980</id>
    </interactant>
    <interactant intactId="EBI-366083">
        <id>P04637</id>
        <label>TP53</label>
    </interactant>
    <organismsDiffer>false</organismsDiffer>
    <experiments>3</experiments>
</comment>
<comment type="interaction">
    <interactant intactId="EBI-355867">
        <id>O14980</id>
    </interactant>
    <interactant intactId="EBI-347088">
        <id>P63104</id>
        <label>YWHAZ</label>
    </interactant>
    <organismsDiffer>false</organismsDiffer>
    <experiments>2</experiments>
</comment>
<comment type="interaction">
    <interactant intactId="EBI-355867">
        <id>O14980</id>
    </interactant>
    <interactant intactId="EBI-6164309">
        <id>P04618</id>
        <label>rev</label>
    </interactant>
    <organismsDiffer>true</organismsDiffer>
    <experiments>2</experiments>
</comment>
<comment type="interaction">
    <interactant intactId="EBI-355867">
        <id>O14980</id>
    </interactant>
    <interactant intactId="EBI-710918">
        <id>Q9WMX2</id>
    </interactant>
    <organismsDiffer>true</organismsDiffer>
    <experiments>3</experiments>
</comment>
<comment type="subcellular location">
    <subcellularLocation>
        <location>Cytoplasm</location>
    </subcellularLocation>
    <subcellularLocation>
        <location>Nucleus</location>
        <location>Nucleoplasm</location>
    </subcellularLocation>
    <subcellularLocation>
        <location>Nucleus</location>
        <location>Cajal body</location>
    </subcellularLocation>
    <subcellularLocation>
        <location>Nucleus</location>
        <location>Nucleolus</location>
    </subcellularLocation>
    <text>Located in the nucleoplasm, Cajal bodies and nucleoli. Shuttles between the nucleus/nucleolus and the cytoplasm.</text>
</comment>
<comment type="tissue specificity">
    <text evidence="33 36">Expressed in heart, brain, placenta, lung, liver, skeletal muscle, pancreas, spleen, thymus, prostate, testis, ovary, small intestine, colon and peripheral blood leukocytes. Not expressed in the kidney.</text>
</comment>
<comment type="miscellaneous">
    <text>Cellular target of leptomycin B (LMB), a XPO1/CRM1 nuclear export inhibitor.</text>
</comment>
<comment type="similarity">
    <text evidence="38">Belongs to the exportin family.</text>
</comment>
<comment type="online information" name="Atlas of Genetics and Cytogenetics in Oncology and Haematology">
    <link uri="https://atlasgeneticsoncology.org/gene/44168/XPO1"/>
</comment>
<name>XPO1_HUMAN</name>
<sequence length="1071" mass="123386">MPAIMTMLADHAARQLLDFSQKLDINLLDNVVNCLYHGEGAQQRMAQEVLTHLKEHPDAWTRVDTILEFSQNMNTKYYGLQILENVIKTRWKILPRNQCEGIKKYVVGLIIKTSSDPTCVEKEKVYIGKLNMILVQILKQEWPKHWPTFISDIVGASRTSESLCQNNMVILKLLSEEVFDFSSGQITQVKSKHLKDSMCNEFSQIFQLCQFVMENSQNAPLVHATLETLLRFLNWIPLGYIFETKLISTLIYKFLNVPMFRNVSLKCLTEIAGVSVSQYEEQFVTLFTLTMMQLKQMLPLNTNIRLAYSNGKDDEQNFIQNLSLFLCTFLKEHDQLIEKRLNLRETLMEALHYMLLVSEVEETEIFKICLEYWNHLAAELYRESPFSTSASPLLSGSQHFDVPPRRQLYLPMLFKVRLLMVSRMAKPEEVLVVENDQGEVVREFMKDTDSINLYKNMRETLVYLTHLDYVDTERIMTEKLHNQVNGTEWSWKNLNTLCWAIGSISGAMHEEDEKRFLVTVIKDLLGLCEQKRGKDNKAIIASNIMYIVGQYPRFLRAHWKFLKTVVNKLFEFMHETHDGVQDMACDTFIKIAQKCRRHFVQVQVGEVMPFIDEILNNINTIICDLQPQQVHTFYEAVGYMIGAQTDQTVQEHLIEKYMLLPNQVWDSIIQQATKNVDILKDPETVKQLGSILKTNVRACKAVGHPFVIQLGRIYLDMLNVYKCLSENISAAIQANGEMVTKQPLIRSMRTVKRETLKLISGWVSRSNDPQMVAENFVPPLLDAVLIDYQRNVPAAREPEVLSTMAIIVNKLGGHITAEIPQIFDAVFECTLNMINKDFEEYPEHRTNFFLLLQAVNSHCFPAFLAIPPTQFKLVLDSIIWAFKHTMRNVADTGLQILFTLLQNVAQEEAAAQSFYQTYFCDILQHIFSVVTDTSHTAGLTMHASILAYMFNLVEEGKISTSLNPGNPVNNQIFLQEYVANLLKSAFPHLQDAQVKLFVTGLFSLNQDIPAFKEHLRDFLVQIKEFAGEDTSDLFLEEREIALRQADEEKHKRQMSVPGIFNPHEIPEEMCD</sequence>
<organism>
    <name type="scientific">Homo sapiens</name>
    <name type="common">Human</name>
    <dbReference type="NCBI Taxonomy" id="9606"/>
    <lineage>
        <taxon>Eukaryota</taxon>
        <taxon>Metazoa</taxon>
        <taxon>Chordata</taxon>
        <taxon>Craniata</taxon>
        <taxon>Vertebrata</taxon>
        <taxon>Euteleostomi</taxon>
        <taxon>Mammalia</taxon>
        <taxon>Eutheria</taxon>
        <taxon>Euarchontoglires</taxon>
        <taxon>Primates</taxon>
        <taxon>Haplorrhini</taxon>
        <taxon>Catarrhini</taxon>
        <taxon>Hominidae</taxon>
        <taxon>Homo</taxon>
    </lineage>
</organism>